<evidence type="ECO:0000250" key="1"/>
<evidence type="ECO:0000250" key="2">
    <source>
        <dbReference type="UniProtKB" id="P29474"/>
    </source>
</evidence>
<evidence type="ECO:0000250" key="3">
    <source>
        <dbReference type="UniProtKB" id="P29476"/>
    </source>
</evidence>
<evidence type="ECO:0000250" key="4">
    <source>
        <dbReference type="UniProtKB" id="P29477"/>
    </source>
</evidence>
<evidence type="ECO:0000250" key="5">
    <source>
        <dbReference type="UniProtKB" id="Q06518"/>
    </source>
</evidence>
<evidence type="ECO:0000255" key="6"/>
<evidence type="ECO:0000255" key="7">
    <source>
        <dbReference type="PROSITE-ProRule" id="PRU00088"/>
    </source>
</evidence>
<evidence type="ECO:0000255" key="8">
    <source>
        <dbReference type="PROSITE-ProRule" id="PRU00716"/>
    </source>
</evidence>
<evidence type="ECO:0000269" key="9">
    <source>
    </source>
</evidence>
<evidence type="ECO:0000269" key="10">
    <source>
    </source>
</evidence>
<evidence type="ECO:0000269" key="11">
    <source>
    </source>
</evidence>
<evidence type="ECO:0000269" key="12">
    <source>
    </source>
</evidence>
<evidence type="ECO:0000269" key="13">
    <source>
    </source>
</evidence>
<evidence type="ECO:0000269" key="14">
    <source>
    </source>
</evidence>
<evidence type="ECO:0000269" key="15">
    <source>
    </source>
</evidence>
<evidence type="ECO:0000269" key="16">
    <source>
    </source>
</evidence>
<evidence type="ECO:0000269" key="17">
    <source>
    </source>
</evidence>
<evidence type="ECO:0000269" key="18">
    <source>
    </source>
</evidence>
<evidence type="ECO:0000269" key="19">
    <source>
    </source>
</evidence>
<evidence type="ECO:0000269" key="20">
    <source>
    </source>
</evidence>
<evidence type="ECO:0000269" key="21">
    <source>
    </source>
</evidence>
<evidence type="ECO:0000269" key="22">
    <source>
    </source>
</evidence>
<evidence type="ECO:0000269" key="23">
    <source>
    </source>
</evidence>
<evidence type="ECO:0000269" key="24">
    <source>
    </source>
</evidence>
<evidence type="ECO:0000269" key="25">
    <source>
    </source>
</evidence>
<evidence type="ECO:0000269" key="26">
    <source>
    </source>
</evidence>
<evidence type="ECO:0000269" key="27">
    <source ref="10"/>
</evidence>
<evidence type="ECO:0000303" key="28">
    <source ref="9"/>
</evidence>
<evidence type="ECO:0000305" key="29"/>
<evidence type="ECO:0000305" key="30">
    <source>
    </source>
</evidence>
<evidence type="ECO:0000305" key="31">
    <source>
    </source>
</evidence>
<evidence type="ECO:0000305" key="32">
    <source>
    </source>
</evidence>
<evidence type="ECO:0000312" key="33">
    <source>
        <dbReference type="HGNC" id="HGNC:7873"/>
    </source>
</evidence>
<evidence type="ECO:0007744" key="34">
    <source>
        <dbReference type="PDB" id="1NSI"/>
    </source>
</evidence>
<evidence type="ECO:0007744" key="35">
    <source>
        <dbReference type="PDB" id="2NSI"/>
    </source>
</evidence>
<evidence type="ECO:0007744" key="36">
    <source>
        <dbReference type="PDB" id="3HR4"/>
    </source>
</evidence>
<evidence type="ECO:0007744" key="37">
    <source>
        <dbReference type="PDB" id="4NOS"/>
    </source>
</evidence>
<evidence type="ECO:0007829" key="38">
    <source>
        <dbReference type="PDB" id="1NSI"/>
    </source>
</evidence>
<evidence type="ECO:0007829" key="39">
    <source>
        <dbReference type="PDB" id="3E7G"/>
    </source>
</evidence>
<evidence type="ECO:0007829" key="40">
    <source>
        <dbReference type="PDB" id="3HR4"/>
    </source>
</evidence>
<evidence type="ECO:0007829" key="41">
    <source>
        <dbReference type="PDB" id="4NOS"/>
    </source>
</evidence>
<accession>P35228</accession>
<accession>A1L3U5</accession>
<accession>B7ZLY2</accession>
<accession>O60757</accession>
<accession>O94994</accession>
<accession>Q16263</accession>
<accession>Q16692</accession>
<accession>Q4TTS5</accession>
<accession>Q9UD42</accession>
<gene>
    <name evidence="33" type="primary">NOS2</name>
    <name type="synonym">NOS2A</name>
</gene>
<name>NOS2_HUMAN</name>
<comment type="function">
    <text evidence="4 14 19 21 24 25 26">Produces nitric oxide (NO) which is a messenger molecule with diverse functions throughout the body (PubMed:7504305, PubMed:7531687, PubMed:7544004, PubMed:7682706). In macrophages, NO mediates tumoricidal and bactericidal actions. Also has nitrosylase activity and mediates cysteine S-nitrosylation of cytoplasmic target proteins such PTGS2/COX2 (By similarity). As component of the iNOS-S100A8/9 transnitrosylase complex involved in the selective inflammatory stimulus-dependent S-nitrosylation of GAPDH on 'Cys-247' implicated in regulation of the GAIT complex activity and probably multiple targets including ANXA5, EZR, MSN and VIM (PubMed:25417112). Involved in inflammation, enhances the synthesis of pro-inflammatory mediators such as IL6 and IL8 (PubMed:19688109).</text>
</comment>
<comment type="catalytic activity">
    <reaction evidence="20 21 26">
        <text>2 L-arginine + 3 NADPH + 4 O2 + H(+) = 2 L-citrulline + 2 nitric oxide + 3 NADP(+) + 4 H2O</text>
        <dbReference type="Rhea" id="RHEA:19897"/>
        <dbReference type="ChEBI" id="CHEBI:15377"/>
        <dbReference type="ChEBI" id="CHEBI:15378"/>
        <dbReference type="ChEBI" id="CHEBI:15379"/>
        <dbReference type="ChEBI" id="CHEBI:16480"/>
        <dbReference type="ChEBI" id="CHEBI:32682"/>
        <dbReference type="ChEBI" id="CHEBI:57743"/>
        <dbReference type="ChEBI" id="CHEBI:57783"/>
        <dbReference type="ChEBI" id="CHEBI:58349"/>
        <dbReference type="EC" id="1.14.13.39"/>
    </reaction>
    <physiologicalReaction direction="left-to-right" evidence="31 32">
        <dbReference type="Rhea" id="RHEA:19898"/>
    </physiologicalReaction>
</comment>
<comment type="cofactor">
    <cofactor evidence="9 10">
        <name>heme b</name>
        <dbReference type="ChEBI" id="CHEBI:60344"/>
    </cofactor>
</comment>
<comment type="cofactor">
    <cofactor evidence="3">
        <name>FAD</name>
        <dbReference type="ChEBI" id="CHEBI:57692"/>
    </cofactor>
    <text evidence="3">Binds 1 FAD.</text>
</comment>
<comment type="cofactor">
    <cofactor evidence="15">
        <name>FMN</name>
        <dbReference type="ChEBI" id="CHEBI:58210"/>
    </cofactor>
    <text evidence="15">Binds 1 FMN.</text>
</comment>
<comment type="cofactor">
    <cofactor evidence="9 10">
        <name>(6R)-L-erythro-5,6,7,8-tetrahydrobiopterin</name>
        <dbReference type="ChEBI" id="CHEBI:59560"/>
    </cofactor>
    <text evidence="30">Tetrahydrobiopterin (BH4). May stabilize the dimeric form of the enzyme.</text>
</comment>
<comment type="activity regulation">
    <text evidence="1">Regulated by calcium/calmodulin. Aspirin inhibits expression and function of this enzyme and effects may be exerted at the level of translational/post-translational modification and directly on the catalytic activity (By similarity).</text>
</comment>
<comment type="subunit">
    <text evidence="4 9 10 11 16 19">Homodimer (PubMed:10074942, PubMed:10409685). Interacts with NHERF1 (PubMed:12080081). Interacts with GAPDH; induced by oxidatively-modified low-densitity lipoprotein (LDL(ox)) (PubMed:25417112). Interacts with S100A8 and S100A9 to form the iNOS-S100A8/9 transnitrosylase complex (PubMed:25417112). Interacts with SPSB1, SPSB2 and SPSB4 (PubMed:21199876). Interacts with ELOC and CUL5 in the presence of SPSB1 or SPSB2 or SPSB4 (PubMed:21199876). Forms a complex with ASL, ASS1 and HSP90AA1; the complex regulates cell-autonomous L-arginine synthesis and citrulline recycling while channeling extracellular L-arginine to nitric oxide synthesis pathway.</text>
</comment>
<comment type="interaction">
    <interactant intactId="EBI-6662224">
        <id>P35228</id>
    </interactant>
    <interactant intactId="EBI-354056">
        <id>P04406</id>
        <label>GAPDH</label>
    </interactant>
    <organismsDiffer>false</organismsDiffer>
    <experiments>8</experiments>
</comment>
<comment type="subcellular location">
    <subcellularLocation>
        <location evidence="16">Cytoplasm</location>
        <location evidence="16">Cytosol</location>
    </subcellularLocation>
    <text evidence="16">Localizes as discrete foci scattered throughout the cytosol and in the presence of SPSB1 and SPSB4, exhibits a more diffuse cytosolic localization.</text>
</comment>
<comment type="alternative products">
    <event type="alternative splicing"/>
    <isoform>
        <id>P35228-1</id>
        <name>1</name>
        <sequence type="displayed"/>
    </isoform>
    <isoform>
        <id>P35228-2</id>
        <name>2</name>
        <sequence type="described" ref="VSP_003582 VSP_003583"/>
    </isoform>
</comment>
<comment type="tissue specificity">
    <text evidence="21">Expressed in the liver, retina, bone cells and airway epithelial cells of the lung. Not expressed in the platelets. Expressed in chondrocytes (PubMed:7504305).</text>
</comment>
<comment type="induction">
    <text evidence="18 19 21 23">By endotoxins and cytokines. Induced by IFNG/IFN-gamma acting synergistically with bacterial lipopolysaccharides (LPS), TNF or IL1B/interleukin-1 beta (PubMed:7504305, PubMed:7528267). Down-regulated by zinc due to inhibition of NF-kappa-B transactivation activity (PubMed:25180171). By oxidatively-modified low-densitity lipoprotein (LDL(ox)) (PubMed:25417112).</text>
</comment>
<comment type="PTM">
    <text evidence="16">Polyubiquitinated; mediated by SPSB1, SPSB2 and SPSB4, leading to proteasomal degradation.</text>
</comment>
<comment type="polymorphism">
    <text evidence="12">Genetic variations in NOS2 are involved in resistance to malaria [MIM:611162].</text>
</comment>
<comment type="similarity">
    <text evidence="29">Belongs to the NOS family.</text>
</comment>
<comment type="online information" name="Wikipedia">
    <link uri="https://en.wikipedia.org/wiki/Nitric_oxide_synthase"/>
    <text>Nitric oxide synthase entry</text>
</comment>
<feature type="chain" id="PRO_0000170930" description="Nitric oxide synthase, inducible">
    <location>
        <begin position="1"/>
        <end position="1153"/>
    </location>
</feature>
<feature type="domain" description="Flavodoxin-like" evidence="7">
    <location>
        <begin position="539"/>
        <end position="677"/>
    </location>
</feature>
<feature type="domain" description="FAD-binding FR-type" evidence="8">
    <location>
        <begin position="730"/>
        <end position="970"/>
    </location>
</feature>
<feature type="region of interest" description="Calmodulin-binding" evidence="15 36">
    <location>
        <begin position="515"/>
        <end position="535"/>
    </location>
</feature>
<feature type="short sequence motif" description="DINNN-motif; mediates interaction with SPSB1, SPSB2 and SPSB4" evidence="16">
    <location>
        <begin position="23"/>
        <end position="27"/>
    </location>
</feature>
<feature type="binding site" evidence="9 10 34 37">
    <location>
        <position position="110"/>
    </location>
    <ligand>
        <name>Zn(2+)</name>
        <dbReference type="ChEBI" id="CHEBI:29105"/>
        <note>ligand shared between homodimeric partners</note>
    </ligand>
</feature>
<feature type="binding site" evidence="9 10 34 37">
    <location>
        <position position="115"/>
    </location>
    <ligand>
        <name>Zn(2+)</name>
        <dbReference type="ChEBI" id="CHEBI:29105"/>
        <note>ligand shared between homodimeric partners</note>
    </ligand>
</feature>
<feature type="binding site" evidence="9 10 34 35 37">
    <location>
        <position position="118"/>
    </location>
    <ligand>
        <name>(6R)-L-erythro-5,6,7,8-tetrahydrobiopterin</name>
        <dbReference type="ChEBI" id="CHEBI:59560"/>
    </ligand>
</feature>
<feature type="binding site" description="axial binding residue" evidence="9 10 34 35 37">
    <location>
        <position position="200"/>
    </location>
    <ligand>
        <name>heme b</name>
        <dbReference type="ChEBI" id="CHEBI:60344"/>
    </ligand>
    <ligandPart>
        <name>Fe</name>
        <dbReference type="ChEBI" id="CHEBI:18248"/>
    </ligandPart>
</feature>
<feature type="binding site" evidence="2">
    <location>
        <position position="263"/>
    </location>
    <ligand>
        <name>L-arginine</name>
        <dbReference type="ChEBI" id="CHEBI:32682"/>
    </ligand>
</feature>
<feature type="binding site" evidence="2">
    <location>
        <position position="372"/>
    </location>
    <ligand>
        <name>L-arginine</name>
        <dbReference type="ChEBI" id="CHEBI:32682"/>
    </ligand>
</feature>
<feature type="binding site" evidence="2">
    <location>
        <position position="373"/>
    </location>
    <ligand>
        <name>L-arginine</name>
        <dbReference type="ChEBI" id="CHEBI:32682"/>
    </ligand>
</feature>
<feature type="binding site" evidence="2">
    <location>
        <position position="377"/>
    </location>
    <ligand>
        <name>L-arginine</name>
        <dbReference type="ChEBI" id="CHEBI:32682"/>
    </ligand>
</feature>
<feature type="binding site" evidence="9 10 34 35 37">
    <location>
        <position position="381"/>
    </location>
    <ligand>
        <name>(6R)-L-erythro-5,6,7,8-tetrahydrobiopterin</name>
        <dbReference type="ChEBI" id="CHEBI:59560"/>
    </ligand>
</feature>
<feature type="binding site" evidence="9 10 34 35 37">
    <location>
        <position position="462"/>
    </location>
    <ligand>
        <name>(6R)-L-erythro-5,6,7,8-tetrahydrobiopterin</name>
        <dbReference type="ChEBI" id="CHEBI:59560"/>
    </ligand>
</feature>
<feature type="binding site" evidence="9 10 34 35 37">
    <location>
        <position position="463"/>
    </location>
    <ligand>
        <name>(6R)-L-erythro-5,6,7,8-tetrahydrobiopterin</name>
        <dbReference type="ChEBI" id="CHEBI:59560"/>
    </ligand>
</feature>
<feature type="binding site" evidence="9 10 34 35 37">
    <location>
        <position position="476"/>
    </location>
    <ligand>
        <name>(6R)-L-erythro-5,6,7,8-tetrahydrobiopterin</name>
        <dbReference type="ChEBI" id="CHEBI:59560"/>
    </ligand>
</feature>
<feature type="binding site" evidence="9 10 34 35 37">
    <location>
        <position position="491"/>
    </location>
    <ligand>
        <name>heme b</name>
        <dbReference type="ChEBI" id="CHEBI:60344"/>
    </ligand>
</feature>
<feature type="binding site" evidence="15 36">
    <location>
        <position position="545"/>
    </location>
    <ligand>
        <name>FMN</name>
        <dbReference type="ChEBI" id="CHEBI:58210"/>
    </ligand>
</feature>
<feature type="binding site" evidence="15 36">
    <location>
        <position position="546"/>
    </location>
    <ligand>
        <name>FMN</name>
        <dbReference type="ChEBI" id="CHEBI:58210"/>
    </ligand>
</feature>
<feature type="binding site" evidence="15 36">
    <location>
        <position position="547"/>
    </location>
    <ligand>
        <name>FMN</name>
        <dbReference type="ChEBI" id="CHEBI:58210"/>
    </ligand>
</feature>
<feature type="binding site" evidence="15 36">
    <location>
        <position position="549"/>
    </location>
    <ligand>
        <name>FMN</name>
        <dbReference type="ChEBI" id="CHEBI:58210"/>
    </ligand>
</feature>
<feature type="binding site" evidence="15 36">
    <location>
        <position position="550"/>
    </location>
    <ligand>
        <name>FMN</name>
        <dbReference type="ChEBI" id="CHEBI:58210"/>
    </ligand>
</feature>
<feature type="binding site" evidence="15 36">
    <location>
        <position position="591"/>
    </location>
    <ligand>
        <name>FMN</name>
        <dbReference type="ChEBI" id="CHEBI:58210"/>
    </ligand>
</feature>
<feature type="binding site" evidence="15 36">
    <location>
        <position position="592"/>
    </location>
    <ligand>
        <name>FMN</name>
        <dbReference type="ChEBI" id="CHEBI:58210"/>
    </ligand>
</feature>
<feature type="binding site" evidence="15 36">
    <location>
        <position position="628"/>
    </location>
    <ligand>
        <name>FMN</name>
        <dbReference type="ChEBI" id="CHEBI:58210"/>
    </ligand>
</feature>
<feature type="binding site" evidence="15 36">
    <location>
        <position position="633"/>
    </location>
    <ligand>
        <name>FMN</name>
        <dbReference type="ChEBI" id="CHEBI:58210"/>
    </ligand>
</feature>
<feature type="binding site" evidence="15 36">
    <location>
        <position position="635"/>
    </location>
    <ligand>
        <name>FMN</name>
        <dbReference type="ChEBI" id="CHEBI:58210"/>
    </ligand>
</feature>
<feature type="binding site" evidence="15 36">
    <location>
        <position position="661"/>
    </location>
    <ligand>
        <name>FMN</name>
        <dbReference type="ChEBI" id="CHEBI:58210"/>
    </ligand>
</feature>
<feature type="binding site" evidence="15 36">
    <location>
        <position position="665"/>
    </location>
    <ligand>
        <name>FMN</name>
        <dbReference type="ChEBI" id="CHEBI:58210"/>
    </ligand>
</feature>
<feature type="binding site" evidence="3">
    <location>
        <position position="750"/>
    </location>
    <ligand>
        <name>NADP(+)</name>
        <dbReference type="ChEBI" id="CHEBI:58349"/>
    </ligand>
</feature>
<feature type="binding site" evidence="3">
    <location>
        <position position="772"/>
    </location>
    <ligand>
        <name>FAD</name>
        <dbReference type="ChEBI" id="CHEBI:57692"/>
    </ligand>
</feature>
<feature type="binding site" evidence="3">
    <location>
        <position position="906"/>
    </location>
    <ligand>
        <name>FAD</name>
        <dbReference type="ChEBI" id="CHEBI:57692"/>
    </ligand>
</feature>
<feature type="binding site" evidence="3">
    <location>
        <position position="908"/>
    </location>
    <ligand>
        <name>FAD</name>
        <dbReference type="ChEBI" id="CHEBI:57692"/>
    </ligand>
</feature>
<feature type="binding site" evidence="3">
    <location>
        <position position="909"/>
    </location>
    <ligand>
        <name>FAD</name>
        <dbReference type="ChEBI" id="CHEBI:57692"/>
    </ligand>
</feature>
<feature type="binding site" evidence="3">
    <location>
        <position position="924"/>
    </location>
    <ligand>
        <name>FAD</name>
        <dbReference type="ChEBI" id="CHEBI:57692"/>
    </ligand>
</feature>
<feature type="binding site" evidence="3">
    <location>
        <position position="926"/>
    </location>
    <ligand>
        <name>FAD</name>
        <dbReference type="ChEBI" id="CHEBI:57692"/>
    </ligand>
</feature>
<feature type="binding site" evidence="3">
    <location>
        <position position="929"/>
    </location>
    <ligand>
        <name>NADP(+)</name>
        <dbReference type="ChEBI" id="CHEBI:58349"/>
    </ligand>
</feature>
<feature type="binding site" evidence="3">
    <location>
        <position position="930"/>
    </location>
    <ligand>
        <name>FAD</name>
        <dbReference type="ChEBI" id="CHEBI:57692"/>
    </ligand>
</feature>
<feature type="binding site" evidence="3">
    <location>
        <position position="943"/>
    </location>
    <ligand>
        <name>FAD</name>
        <dbReference type="ChEBI" id="CHEBI:57692"/>
    </ligand>
</feature>
<feature type="binding site" evidence="3">
    <location>
        <position position="944"/>
    </location>
    <ligand>
        <name>FAD</name>
        <dbReference type="ChEBI" id="CHEBI:57692"/>
    </ligand>
</feature>
<feature type="binding site" evidence="3">
    <location>
        <position position="945"/>
    </location>
    <ligand>
        <name>FAD</name>
        <dbReference type="ChEBI" id="CHEBI:57692"/>
    </ligand>
</feature>
<feature type="binding site" evidence="3">
    <location>
        <position position="984"/>
    </location>
    <ligand>
        <name>NADP(+)</name>
        <dbReference type="ChEBI" id="CHEBI:58349"/>
    </ligand>
</feature>
<feature type="binding site" evidence="3">
    <location>
        <position position="1017"/>
    </location>
    <ligand>
        <name>NADP(+)</name>
        <dbReference type="ChEBI" id="CHEBI:58349"/>
    </ligand>
</feature>
<feature type="binding site" evidence="3">
    <location>
        <position position="1046"/>
    </location>
    <ligand>
        <name>NADP(+)</name>
        <dbReference type="ChEBI" id="CHEBI:58349"/>
    </ligand>
</feature>
<feature type="binding site" evidence="3">
    <location>
        <position position="1047"/>
    </location>
    <ligand>
        <name>NADP(+)</name>
        <dbReference type="ChEBI" id="CHEBI:58349"/>
    </ligand>
</feature>
<feature type="binding site" evidence="3">
    <location>
        <position position="1053"/>
    </location>
    <ligand>
        <name>NADP(+)</name>
        <dbReference type="ChEBI" id="CHEBI:58349"/>
    </ligand>
</feature>
<feature type="binding site" evidence="3">
    <location>
        <position position="1055"/>
    </location>
    <ligand>
        <name>NADP(+)</name>
        <dbReference type="ChEBI" id="CHEBI:58349"/>
    </ligand>
</feature>
<feature type="binding site" evidence="3">
    <location>
        <position position="1057"/>
    </location>
    <ligand>
        <name>NADP(+)</name>
        <dbReference type="ChEBI" id="CHEBI:58349"/>
    </ligand>
</feature>
<feature type="binding site" evidence="3">
    <location>
        <position position="1090"/>
    </location>
    <ligand>
        <name>NADP(+)</name>
        <dbReference type="ChEBI" id="CHEBI:58349"/>
    </ligand>
</feature>
<feature type="modified residue" description="Phosphoserine; by PKA" evidence="6">
    <location>
        <position position="234"/>
    </location>
</feature>
<feature type="modified residue" description="Phosphotyrosine" evidence="5">
    <location>
        <position position="575"/>
    </location>
</feature>
<feature type="modified residue" description="Phosphoserine; by PKA" evidence="6">
    <location>
        <position position="578"/>
    </location>
</feature>
<feature type="modified residue" description="Phosphoserine; by PKA" evidence="6">
    <location>
        <position position="892"/>
    </location>
</feature>
<feature type="splice variant" id="VSP_003582" description="In isoform 2." evidence="28">
    <location>
        <begin position="264"/>
        <end position="288"/>
    </location>
</feature>
<feature type="splice variant" id="VSP_003583" description="In isoform 2." evidence="28">
    <location>
        <begin position="298"/>
        <end position="311"/>
    </location>
</feature>
<feature type="sequence variant" id="VAR_024548" description="In dbSNP:rs3730017." evidence="27">
    <original>R</original>
    <variation>W</variation>
    <location>
        <position position="221"/>
    </location>
</feature>
<feature type="sequence variant" id="VAR_022127" description="Found in patients with very early onset inflammatory bowel disease; increases NOS2 activity; dbSNP:rs2297518." evidence="17 22 24 27">
    <original>S</original>
    <variation>L</variation>
    <location>
        <position position="608"/>
    </location>
</feature>
<feature type="sequence variant" id="VAR_036302" description="In a breast cancer sample; somatic mutation; dbSNP:rs769900089." evidence="13">
    <original>A</original>
    <variation>S</variation>
    <location>
        <position position="679"/>
    </location>
</feature>
<feature type="sequence variant" id="VAR_025020" description="In dbSNP:rs28944173." evidence="27">
    <original>T</original>
    <variation>A</variation>
    <location>
        <position position="747"/>
    </location>
</feature>
<feature type="sequence variant" id="VAR_025021" description="In dbSNP:rs28944201." evidence="27">
    <original>R</original>
    <variation>C</variation>
    <location>
        <position position="1009"/>
    </location>
</feature>
<feature type="mutagenesis site" description="Loss of interaction with SPSB1 and SPSB4." evidence="16">
    <original>N</original>
    <variation>A</variation>
    <location>
        <position position="27"/>
    </location>
</feature>
<feature type="sequence conflict" description="In Ref. 4; AAA56666." evidence="29" ref="4">
    <original>D</original>
    <variation>G</variation>
    <location>
        <position position="23"/>
    </location>
</feature>
<feature type="sequence conflict" description="In Ref. 4; AAA56666." evidence="29" ref="4">
    <original>F</original>
    <variation>L</variation>
    <location>
        <position position="154"/>
    </location>
</feature>
<feature type="sequence conflict" description="In Ref. 4; AAA56666." evidence="29" ref="4">
    <original>G</original>
    <variation>V</variation>
    <location>
        <position position="177"/>
    </location>
</feature>
<feature type="sequence conflict" description="In Ref. 8; AAC19133." evidence="29" ref="8">
    <original>R</original>
    <variation>H</variation>
    <location>
        <position position="266"/>
    </location>
</feature>
<feature type="sequence conflict" description="In Ref. 2; AAA59171." evidence="29" ref="2">
    <original>L</original>
    <variation>I</variation>
    <location>
        <position position="423"/>
    </location>
</feature>
<feature type="sequence conflict" description="In Ref. 8; AAC19133." evidence="29" ref="8">
    <original>A</original>
    <variation>T</variation>
    <location>
        <position position="439"/>
    </location>
</feature>
<feature type="sequence conflict" description="In Ref. 12; AAI44127." evidence="29" ref="12">
    <original>A</original>
    <variation>G</variation>
    <location>
        <position position="552"/>
    </location>
</feature>
<feature type="sequence conflict" description="In Ref. 7; AAB60366." evidence="29" ref="7">
    <original>T</original>
    <variation>I</variation>
    <location>
        <position position="676"/>
    </location>
</feature>
<feature type="sequence conflict" description="In Ref. 4; AAA56666." evidence="29" ref="4">
    <original>T</original>
    <variation>A</variation>
    <location>
        <position position="800"/>
    </location>
</feature>
<feature type="sequence conflict" description="In Ref. 2; AAA59171." evidence="29" ref="2">
    <original>A</original>
    <variation>D</variation>
    <location>
        <position position="805"/>
    </location>
</feature>
<feature type="sequence conflict" description="In Ref. 2; AAA59171." evidence="29" ref="2">
    <original>FL</original>
    <variation>SP</variation>
    <location>
        <begin position="831"/>
        <end position="832"/>
    </location>
</feature>
<feature type="sequence conflict" description="In Ref. 4; AAA56666." evidence="29" ref="4">
    <original>S</original>
    <variation>P</variation>
    <location>
        <position position="913"/>
    </location>
</feature>
<feature type="sequence conflict" description="In Ref. 2; AAA59171 and 7; AAB60366." evidence="29" ref="2 7">
    <original>R</original>
    <variation>G</variation>
    <location>
        <position position="933"/>
    </location>
</feature>
<feature type="sequence conflict" description="In Ref. 2; AAA59171 and 7; AAB60366." evidence="29" ref="2 7">
    <original>G</original>
    <variation>A</variation>
    <location>
        <position position="966"/>
    </location>
</feature>
<feature type="sequence conflict" description="In Ref. 2; AAA59171." evidence="29" ref="2">
    <original>A</original>
    <variation>V</variation>
    <location>
        <position position="987"/>
    </location>
</feature>
<feature type="strand" evidence="39">
    <location>
        <begin position="85"/>
        <end position="89"/>
    </location>
</feature>
<feature type="turn" evidence="39">
    <location>
        <begin position="90"/>
        <end position="92"/>
    </location>
</feature>
<feature type="strand" evidence="39">
    <location>
        <begin position="95"/>
        <end position="98"/>
    </location>
</feature>
<feature type="helix" evidence="39">
    <location>
        <begin position="100"/>
        <end position="103"/>
    </location>
</feature>
<feature type="strand" evidence="41">
    <location>
        <begin position="104"/>
        <end position="106"/>
    </location>
</feature>
<feature type="helix" evidence="39">
    <location>
        <begin position="123"/>
        <end position="125"/>
    </location>
</feature>
<feature type="helix" evidence="39">
    <location>
        <begin position="136"/>
        <end position="152"/>
    </location>
</feature>
<feature type="strand" evidence="38">
    <location>
        <begin position="154"/>
        <end position="156"/>
    </location>
</feature>
<feature type="helix" evidence="39">
    <location>
        <begin position="159"/>
        <end position="175"/>
    </location>
</feature>
<feature type="helix" evidence="39">
    <location>
        <begin position="183"/>
        <end position="195"/>
    </location>
</feature>
<feature type="helix" evidence="39">
    <location>
        <begin position="203"/>
        <end position="205"/>
    </location>
</feature>
<feature type="strand" evidence="39">
    <location>
        <begin position="210"/>
        <end position="213"/>
    </location>
</feature>
<feature type="helix" evidence="39">
    <location>
        <begin position="220"/>
        <end position="235"/>
    </location>
</feature>
<feature type="helix" evidence="39">
    <location>
        <begin position="236"/>
        <end position="238"/>
    </location>
</feature>
<feature type="strand" evidence="39">
    <location>
        <begin position="243"/>
        <end position="246"/>
    </location>
</feature>
<feature type="strand" evidence="39">
    <location>
        <begin position="251"/>
        <end position="255"/>
    </location>
</feature>
<feature type="strand" evidence="39">
    <location>
        <begin position="261"/>
        <end position="265"/>
    </location>
</feature>
<feature type="strand" evidence="39">
    <location>
        <begin position="269"/>
        <end position="271"/>
    </location>
</feature>
<feature type="strand" evidence="39">
    <location>
        <begin position="277"/>
        <end position="279"/>
    </location>
</feature>
<feature type="helix" evidence="39">
    <location>
        <begin position="281"/>
        <end position="283"/>
    </location>
</feature>
<feature type="helix" evidence="39">
    <location>
        <begin position="284"/>
        <end position="292"/>
    </location>
</feature>
<feature type="strand" evidence="39">
    <location>
        <begin position="307"/>
        <end position="310"/>
    </location>
</feature>
<feature type="strand" evidence="39">
    <location>
        <begin position="317"/>
        <end position="319"/>
    </location>
</feature>
<feature type="helix" evidence="39">
    <location>
        <begin position="323"/>
        <end position="325"/>
    </location>
</feature>
<feature type="strand" evidence="39">
    <location>
        <begin position="328"/>
        <end position="330"/>
    </location>
</feature>
<feature type="helix" evidence="39">
    <location>
        <begin position="337"/>
        <end position="342"/>
    </location>
</feature>
<feature type="strand" evidence="39">
    <location>
        <begin position="345"/>
        <end position="348"/>
    </location>
</feature>
<feature type="strand" evidence="39">
    <location>
        <begin position="356"/>
        <end position="359"/>
    </location>
</feature>
<feature type="strand" evidence="39">
    <location>
        <begin position="362"/>
        <end position="365"/>
    </location>
</feature>
<feature type="helix" evidence="39">
    <location>
        <begin position="375"/>
        <end position="379"/>
    </location>
</feature>
<feature type="helix" evidence="39">
    <location>
        <begin position="381"/>
        <end position="384"/>
    </location>
</feature>
<feature type="turn" evidence="39">
    <location>
        <begin position="386"/>
        <end position="389"/>
    </location>
</feature>
<feature type="helix" evidence="39">
    <location>
        <begin position="392"/>
        <end position="399"/>
    </location>
</feature>
<feature type="helix" evidence="39">
    <location>
        <begin position="406"/>
        <end position="408"/>
    </location>
</feature>
<feature type="helix" evidence="39">
    <location>
        <begin position="410"/>
        <end position="428"/>
    </location>
</feature>
<feature type="helix" evidence="39">
    <location>
        <begin position="436"/>
        <end position="454"/>
    </location>
</feature>
<feature type="helix" evidence="39">
    <location>
        <begin position="461"/>
        <end position="464"/>
    </location>
</feature>
<feature type="strand" evidence="39">
    <location>
        <begin position="467"/>
        <end position="469"/>
    </location>
</feature>
<feature type="helix" evidence="39">
    <location>
        <begin position="470"/>
        <end position="472"/>
    </location>
</feature>
<feature type="helix" evidence="39">
    <location>
        <begin position="474"/>
        <end position="477"/>
    </location>
</feature>
<feature type="strand" evidence="39">
    <location>
        <begin position="486"/>
        <end position="491"/>
    </location>
</feature>
<feature type="helix" evidence="39">
    <location>
        <begin position="495"/>
        <end position="498"/>
    </location>
</feature>
<feature type="helix" evidence="40">
    <location>
        <begin position="515"/>
        <end position="534"/>
    </location>
</feature>
<feature type="strand" evidence="40">
    <location>
        <begin position="538"/>
        <end position="544"/>
    </location>
</feature>
<feature type="strand" evidence="40">
    <location>
        <begin position="546"/>
        <end position="548"/>
    </location>
</feature>
<feature type="helix" evidence="40">
    <location>
        <begin position="549"/>
        <end position="561"/>
    </location>
</feature>
<feature type="turn" evidence="40">
    <location>
        <begin position="562"/>
        <end position="564"/>
    </location>
</feature>
<feature type="strand" evidence="40">
    <location>
        <begin position="565"/>
        <end position="571"/>
    </location>
</feature>
<feature type="helix" evidence="40">
    <location>
        <begin position="572"/>
        <end position="574"/>
    </location>
</feature>
<feature type="helix" evidence="40">
    <location>
        <begin position="577"/>
        <end position="581"/>
    </location>
</feature>
<feature type="strand" evidence="40">
    <location>
        <begin position="584"/>
        <end position="591"/>
    </location>
</feature>
<feature type="turn" evidence="40">
    <location>
        <begin position="594"/>
        <end position="596"/>
    </location>
</feature>
<feature type="helix" evidence="40">
    <location>
        <begin position="600"/>
        <end position="602"/>
    </location>
</feature>
<feature type="helix" evidence="40">
    <location>
        <begin position="603"/>
        <end position="611"/>
    </location>
</feature>
<feature type="strand" evidence="40">
    <location>
        <begin position="620"/>
        <end position="627"/>
    </location>
</feature>
<feature type="strand" evidence="40">
    <location>
        <begin position="631"/>
        <end position="633"/>
    </location>
</feature>
<feature type="helix" evidence="40">
    <location>
        <begin position="636"/>
        <end position="648"/>
    </location>
</feature>
<feature type="strand" evidence="40">
    <location>
        <begin position="651"/>
        <end position="654"/>
    </location>
</feature>
<feature type="strand" evidence="40">
    <location>
        <begin position="657"/>
        <end position="660"/>
    </location>
</feature>
<feature type="helix" evidence="40">
    <location>
        <begin position="665"/>
        <end position="683"/>
    </location>
</feature>
<feature type="helix" evidence="40">
    <location>
        <begin position="689"/>
        <end position="691"/>
    </location>
</feature>
<proteinExistence type="evidence at protein level"/>
<organism>
    <name type="scientific">Homo sapiens</name>
    <name type="common">Human</name>
    <dbReference type="NCBI Taxonomy" id="9606"/>
    <lineage>
        <taxon>Eukaryota</taxon>
        <taxon>Metazoa</taxon>
        <taxon>Chordata</taxon>
        <taxon>Craniata</taxon>
        <taxon>Vertebrata</taxon>
        <taxon>Euteleostomi</taxon>
        <taxon>Mammalia</taxon>
        <taxon>Eutheria</taxon>
        <taxon>Euarchontoglires</taxon>
        <taxon>Primates</taxon>
        <taxon>Haplorrhini</taxon>
        <taxon>Catarrhini</taxon>
        <taxon>Hominidae</taxon>
        <taxon>Homo</taxon>
    </lineage>
</organism>
<dbReference type="EC" id="1.14.13.39" evidence="21 26"/>
<dbReference type="EMBL" id="L24553">
    <property type="protein sequence ID" value="AAA36375.1"/>
    <property type="molecule type" value="mRNA"/>
</dbReference>
<dbReference type="EMBL" id="L09210">
    <property type="protein sequence ID" value="AAA59171.1"/>
    <property type="molecule type" value="mRNA"/>
</dbReference>
<dbReference type="EMBL" id="X73029">
    <property type="protein sequence ID" value="CAA51512.1"/>
    <property type="molecule type" value="mRNA"/>
</dbReference>
<dbReference type="EMBL" id="U05810">
    <property type="protein sequence ID" value="AAA56666.1"/>
    <property type="molecule type" value="mRNA"/>
</dbReference>
<dbReference type="EMBL" id="U31511">
    <property type="protein sequence ID" value="AAB49041.1"/>
    <property type="molecule type" value="mRNA"/>
</dbReference>
<dbReference type="EMBL" id="D26525">
    <property type="protein sequence ID" value="BAA05531.1"/>
    <property type="molecule type" value="mRNA"/>
</dbReference>
<dbReference type="EMBL" id="U20141">
    <property type="protein sequence ID" value="AAB60366.1"/>
    <property type="molecule type" value="mRNA"/>
</dbReference>
<dbReference type="EMBL" id="AF068236">
    <property type="protein sequence ID" value="AAC19133.1"/>
    <property type="molecule type" value="mRNA"/>
</dbReference>
<dbReference type="EMBL" id="AB022318">
    <property type="protein sequence ID" value="BAA37123.1"/>
    <property type="molecule type" value="mRNA"/>
</dbReference>
<dbReference type="EMBL" id="DQ060518">
    <property type="protein sequence ID" value="AAY43131.1"/>
    <property type="molecule type" value="Genomic_DNA"/>
</dbReference>
<dbReference type="EMBL" id="EU332854">
    <property type="protein sequence ID" value="ABY87543.1"/>
    <property type="molecule type" value="Genomic_DNA"/>
</dbReference>
<dbReference type="EMBL" id="BC130283">
    <property type="protein sequence ID" value="AAI30284.1"/>
    <property type="molecule type" value="mRNA"/>
</dbReference>
<dbReference type="EMBL" id="BC144126">
    <property type="protein sequence ID" value="AAI44127.1"/>
    <property type="molecule type" value="mRNA"/>
</dbReference>
<dbReference type="EMBL" id="S75615">
    <property type="protein sequence ID" value="AAD14179.1"/>
    <property type="molecule type" value="mRNA"/>
</dbReference>
<dbReference type="CCDS" id="CCDS11223.1">
    <molecule id="P35228-1"/>
</dbReference>
<dbReference type="PIR" id="A49676">
    <property type="entry name" value="A49676"/>
</dbReference>
<dbReference type="RefSeq" id="NP_000616.3">
    <molecule id="P35228-1"/>
    <property type="nucleotide sequence ID" value="NM_000625.4"/>
</dbReference>
<dbReference type="RefSeq" id="XP_011523161.1">
    <property type="nucleotide sequence ID" value="XM_011524859.2"/>
</dbReference>
<dbReference type="PDB" id="1NSI">
    <property type="method" value="X-ray"/>
    <property type="resolution" value="2.55 A"/>
    <property type="chains" value="A/B/C/D=74-504"/>
</dbReference>
<dbReference type="PDB" id="2LL6">
    <property type="method" value="NMR"/>
    <property type="chains" value="B=515-531"/>
</dbReference>
<dbReference type="PDB" id="2NSI">
    <property type="method" value="X-ray"/>
    <property type="resolution" value="3.00 A"/>
    <property type="chains" value="A/B/C/D=74-504"/>
</dbReference>
<dbReference type="PDB" id="3E7G">
    <property type="method" value="X-ray"/>
    <property type="resolution" value="2.20 A"/>
    <property type="chains" value="A/B/C/D=82-505"/>
</dbReference>
<dbReference type="PDB" id="3EJ8">
    <property type="method" value="X-ray"/>
    <property type="resolution" value="2.55 A"/>
    <property type="chains" value="A/B/C/D=82-505"/>
</dbReference>
<dbReference type="PDB" id="3HR4">
    <property type="method" value="X-ray"/>
    <property type="resolution" value="2.50 A"/>
    <property type="chains" value="A/C/E/G=503-715"/>
</dbReference>
<dbReference type="PDB" id="4CX7">
    <property type="method" value="X-ray"/>
    <property type="resolution" value="3.16 A"/>
    <property type="chains" value="A/B/C/D=74-504"/>
</dbReference>
<dbReference type="PDB" id="4NOS">
    <property type="method" value="X-ray"/>
    <property type="resolution" value="2.25 A"/>
    <property type="chains" value="A/B/C/D=82-508"/>
</dbReference>
<dbReference type="PDB" id="5TP6">
    <property type="method" value="NMR"/>
    <property type="chains" value="B=507-531"/>
</dbReference>
<dbReference type="PDB" id="5XN3">
    <property type="method" value="X-ray"/>
    <property type="resolution" value="1.34 A"/>
    <property type="chains" value="B=23-28"/>
</dbReference>
<dbReference type="PDB" id="6JWM">
    <property type="method" value="X-ray"/>
    <property type="resolution" value="1.23 A"/>
    <property type="chains" value="B=21-27"/>
</dbReference>
<dbReference type="PDB" id="6JWN">
    <property type="method" value="X-ray"/>
    <property type="resolution" value="1.61 A"/>
    <property type="chains" value="B/D=21-29"/>
</dbReference>
<dbReference type="PDB" id="6KEY">
    <property type="method" value="X-ray"/>
    <property type="resolution" value="1.24 A"/>
    <property type="chains" value="B=22-30"/>
</dbReference>
<dbReference type="PDBsum" id="1NSI"/>
<dbReference type="PDBsum" id="2LL6"/>
<dbReference type="PDBsum" id="2NSI"/>
<dbReference type="PDBsum" id="3E7G"/>
<dbReference type="PDBsum" id="3EJ8"/>
<dbReference type="PDBsum" id="3HR4"/>
<dbReference type="PDBsum" id="4CX7"/>
<dbReference type="PDBsum" id="4NOS"/>
<dbReference type="PDBsum" id="5TP6"/>
<dbReference type="PDBsum" id="5XN3"/>
<dbReference type="PDBsum" id="6JWM"/>
<dbReference type="PDBsum" id="6JWN"/>
<dbReference type="PDBsum" id="6KEY"/>
<dbReference type="BMRB" id="P35228"/>
<dbReference type="SMR" id="P35228"/>
<dbReference type="BioGRID" id="110906">
    <property type="interactions" value="177"/>
</dbReference>
<dbReference type="ComplexPortal" id="CPX-52">
    <property type="entry name" value="iNOS-S100A8/A9 complex"/>
</dbReference>
<dbReference type="CORUM" id="P35228"/>
<dbReference type="DIP" id="DIP-59359N"/>
<dbReference type="FunCoup" id="P35228">
    <property type="interactions" value="910"/>
</dbReference>
<dbReference type="IntAct" id="P35228">
    <property type="interactions" value="8"/>
</dbReference>
<dbReference type="MINT" id="P35228"/>
<dbReference type="STRING" id="9606.ENSP00000327251"/>
<dbReference type="BindingDB" id="P35228"/>
<dbReference type="ChEMBL" id="CHEMBL4481"/>
<dbReference type="DrugBank" id="DB07003">
    <property type="generic name" value="(2S)-2-methyl-2,3-dihydrothieno[2,3-f][1,4]oxazepin-5-amine"/>
</dbReference>
<dbReference type="DrugBank" id="DB07007">
    <property type="generic name" value="(3R)-3-[(1,2,3,4-tetrahydroisoquinolin-7-yloxy)methyl]-2,3-dihydrothieno[2,3-f][1,4]oxazepin-5-amine"/>
</dbReference>
<dbReference type="DrugBank" id="DB07011">
    <property type="generic name" value="(3S)-1-(1,3-BENZODIOXOL-5-YLMETHYL)-3-[4-(1H-IMIDAZOL-1-YL)PHENOXY]PIPERIDINE"/>
</dbReference>
<dbReference type="DrugBank" id="DB07405">
    <property type="generic name" value="1-(6-CYANO-3-PYRIDYLCARBONYL)-5',8'-DIFLUOROSPIRO[PIPERIDINE-4,2'(1'H)-QUINAZOLINE]-4'-AMINE"/>
</dbReference>
<dbReference type="DrugBank" id="DB08750">
    <property type="generic name" value="1-[4-(AMINOMETHYL)BENZOYL]-5'-FLUORO-1'H-SPIRO[PIPERIDINE-4,2'-QUINAZOLIN]-4'-AMINE"/>
</dbReference>
<dbReference type="DrugBank" id="DB02335">
    <property type="generic name" value="2-Aminothiazoline"/>
</dbReference>
<dbReference type="DrugBank" id="DB01997">
    <property type="generic name" value="3-Bromo-7-Nitroindazole"/>
</dbReference>
<dbReference type="DrugBank" id="DB07029">
    <property type="generic name" value="4-(1,3-BENZODIOXOL-5-YLOXY)-2-[4-(1H-IMIDAZOL-1-YL)PHENOXY]-6-METHYLPYRIMIDINE"/>
</dbReference>
<dbReference type="DrugBank" id="DB07008">
    <property type="generic name" value="4-(1,3-BENZODIOXOL-5-YLOXY)-2-[4-(1H-IMIDAZOL-1-YL)PHENOXY]PYRIMIDINE"/>
</dbReference>
<dbReference type="DrugBank" id="DB08214">
    <property type="generic name" value="4-(1H-IMIDAZOL-1-YL)PHENOL"/>
</dbReference>
<dbReference type="DrugBank" id="DB07002">
    <property type="generic name" value="4-({4-[(4-methoxypyridin-2-yl)amino]piperidin-1-yl}carbonyl)benzonitrile"/>
</dbReference>
<dbReference type="DrugBank" id="DB01835">
    <property type="generic name" value="4R-Fluoro-N6-ethanimidoyl-L-lysine"/>
</dbReference>
<dbReference type="DrugBank" id="DB06879">
    <property type="generic name" value="5-(4'-AMINO-1'-ETHYL-5',8'-DIFLUORO-1'H-SPIRO[PIPERIDINE-4,2'-QUINAZOLINE]-1-YLCARBONYL)PICOLINONITRILE"/>
</dbReference>
<dbReference type="DrugBank" id="DB04534">
    <property type="generic name" value="5-Nitroindazole"/>
</dbReference>
<dbReference type="DrugBank" id="DB03100">
    <property type="generic name" value="6-Nitroindazole"/>
</dbReference>
<dbReference type="DrugBank" id="DB02207">
    <property type="generic name" value="7-Nitroindazole"/>
</dbReference>
<dbReference type="DrugBank" id="DB05631">
    <property type="generic name" value="ALT-2074"/>
</dbReference>
<dbReference type="DrugBank" id="DB00125">
    <property type="generic name" value="Arginine"/>
</dbReference>
<dbReference type="DrugBank" id="DB12651">
    <property type="generic name" value="Bardoxolone"/>
</dbReference>
<dbReference type="DrugBank" id="DB00155">
    <property type="generic name" value="Citrulline"/>
</dbReference>
<dbReference type="DrugBank" id="DB11672">
    <property type="generic name" value="Curcumin"/>
</dbReference>
<dbReference type="DrugBank" id="DB01234">
    <property type="generic name" value="Dexamethasone"/>
</dbReference>
<dbReference type="DrugBank" id="DB14649">
    <property type="generic name" value="Dexamethasone acetate"/>
</dbReference>
<dbReference type="DrugBank" id="DB11327">
    <property type="generic name" value="Dipyrithione"/>
</dbReference>
<dbReference type="DrugBank" id="DB00997">
    <property type="generic name" value="Doxorubicin"/>
</dbReference>
<dbReference type="DrugBank" id="DB07306">
    <property type="generic name" value="ETHYL 4-[(4-CHLOROPYRIDIN-2-YL)AMINO]PIPERIDINE-1-CARBOXYLATE"/>
</dbReference>
<dbReference type="DrugBank" id="DB07388">
    <property type="generic name" value="ETHYL 4-[(4-METHYLPYRIDIN-2-YL)AMINO]PIPERIDINE-1-CARBOXYLATE"/>
</dbReference>
<dbReference type="DrugBank" id="DB05252">
    <property type="generic name" value="Fenoxaprop-ethyl"/>
</dbReference>
<dbReference type="DrugBank" id="DB18267">
    <property type="generic name" value="Ferroheme"/>
</dbReference>
<dbReference type="DrugBank" id="DB01381">
    <property type="generic name" value="Ginkgo biloba"/>
</dbReference>
<dbReference type="DrugBank" id="DB12237">
    <property type="generic name" value="GW-274150"/>
</dbReference>
<dbReference type="DrugBank" id="DB03366">
    <property type="generic name" value="Imidazole"/>
</dbReference>
<dbReference type="DrugBank" id="DB05214">
    <property type="generic name" value="KD7040"/>
</dbReference>
<dbReference type="DrugBank" id="DB04400">
    <property type="generic name" value="L-erythro-7,8-dihydrobiopterin"/>
</dbReference>
<dbReference type="DrugBank" id="DB09237">
    <property type="generic name" value="Levamlodipine"/>
</dbReference>
<dbReference type="DrugBank" id="DB00244">
    <property type="generic name" value="Mesalazine"/>
</dbReference>
<dbReference type="DrugBank" id="DB01110">
    <property type="generic name" value="Miconazole"/>
</dbReference>
<dbReference type="DrugBank" id="DB01017">
    <property type="generic name" value="Minocycline"/>
</dbReference>
<dbReference type="DrugBank" id="DB03144">
    <property type="generic name" value="N(5)-[(hydroxyamino)(imino)methyl]-L-ornithine"/>
</dbReference>
<dbReference type="DrugBank" id="DB03305">
    <property type="generic name" value="N(G)-Iminoethylornithine"/>
</dbReference>
<dbReference type="DrugBank" id="DB01686">
    <property type="generic name" value="N,N-dimethylarginine"/>
</dbReference>
<dbReference type="DrugBank" id="DB03449">
    <property type="generic name" value="N-(4-{2-[(3-chlorobenzyl)amino]ethyl}phenyl)thiophene-2-carboximidamide"/>
</dbReference>
<dbReference type="DrugBank" id="DB06916">
    <property type="generic name" value="N-[2-(1,3-BENZODIOXOL-5-YL)ETHYL]-1-[2-(1H-IMIDAZOL-1-YL)-6-METHYLPYRIMIDIN-4-YL]-D-PROLINAMIDE"/>
</dbReference>
<dbReference type="DrugBank" id="DB07318">
    <property type="generic name" value="N-[2-(4-AMINO-5,8-DIFLUORO-1,2-DIHYDROQUINAZOLIN-2-YL)ETHYL]-3-FURAMIDE"/>
</dbReference>
<dbReference type="DrugBank" id="DB07389">
    <property type="generic name" value="N-[2-(6-AMINO-4-METHYLPYRIDIN-2-YL)ETHYL]-4-CYANOBENZAMIDE"/>
</dbReference>
<dbReference type="DrugBank" id="DB02044">
    <property type="generic name" value="N-[3-(aminomethyl)benzyl]acetamidine"/>
</dbReference>
<dbReference type="DrugBank" id="DB02644">
    <property type="generic name" value="N-omega-propyl-L-arginine"/>
</dbReference>
<dbReference type="DrugBank" id="DB12648">
    <property type="generic name" value="Nona-arginine"/>
</dbReference>
<dbReference type="DrugBank" id="DB05383">
    <property type="generic name" value="Pimagedine"/>
</dbReference>
<dbReference type="DrugBank" id="DB03910">
    <property type="generic name" value="S,S'-(1,3-Phenylene-Bis(1,2-Ethanediyl))Bis-Isothiourea"/>
</dbReference>
<dbReference type="DrugBank" id="DB02234">
    <property type="generic name" value="S-Ethylisothiourea"/>
</dbReference>
<dbReference type="DrugBank" id="DB03953">
    <property type="generic name" value="Thiocitrulline"/>
</dbReference>
<dbReference type="DrugBank" id="DB02462">
    <property type="generic name" value="Thiocoumarin"/>
</dbReference>
<dbReference type="DrugBank" id="DB08814">
    <property type="generic name" value="Triflusal"/>
</dbReference>
<dbReference type="DrugCentral" id="P35228"/>
<dbReference type="GuidetoPHARMACOLOGY" id="1250"/>
<dbReference type="GlyGen" id="P35228">
    <property type="glycosylation" value="2 sites, 1 O-linked glycan (1 site)"/>
</dbReference>
<dbReference type="iPTMnet" id="P35228"/>
<dbReference type="PhosphoSitePlus" id="P35228"/>
<dbReference type="SwissPalm" id="P35228"/>
<dbReference type="BioMuta" id="NOS2"/>
<dbReference type="DMDM" id="1352513"/>
<dbReference type="jPOST" id="P35228"/>
<dbReference type="MassIVE" id="P35228"/>
<dbReference type="PaxDb" id="9606-ENSP00000327251"/>
<dbReference type="PeptideAtlas" id="P35228"/>
<dbReference type="ProteomicsDB" id="54993">
    <molecule id="P35228-1"/>
</dbReference>
<dbReference type="ProteomicsDB" id="54994">
    <molecule id="P35228-2"/>
</dbReference>
<dbReference type="Antibodypedia" id="4550">
    <property type="antibodies" value="1124 antibodies from 47 providers"/>
</dbReference>
<dbReference type="DNASU" id="4843"/>
<dbReference type="Ensembl" id="ENST00000313735.11">
    <molecule id="P35228-1"/>
    <property type="protein sequence ID" value="ENSP00000327251.6"/>
    <property type="gene ID" value="ENSG00000007171.19"/>
</dbReference>
<dbReference type="GeneID" id="4843"/>
<dbReference type="KEGG" id="hsa:4843"/>
<dbReference type="MANE-Select" id="ENST00000313735.11">
    <property type="protein sequence ID" value="ENSP00000327251.6"/>
    <property type="RefSeq nucleotide sequence ID" value="NM_000625.4"/>
    <property type="RefSeq protein sequence ID" value="NP_000616.3"/>
</dbReference>
<dbReference type="UCSC" id="uc002gzu.4">
    <molecule id="P35228-1"/>
    <property type="organism name" value="human"/>
</dbReference>
<dbReference type="AGR" id="HGNC:7873"/>
<dbReference type="CTD" id="4843"/>
<dbReference type="DisGeNET" id="4843"/>
<dbReference type="GeneCards" id="NOS2"/>
<dbReference type="HGNC" id="HGNC:7873">
    <property type="gene designation" value="NOS2"/>
</dbReference>
<dbReference type="HPA" id="ENSG00000007171">
    <property type="expression patterns" value="Group enriched (intestine, lymphoid tissue)"/>
</dbReference>
<dbReference type="MalaCards" id="NOS2"/>
<dbReference type="MIM" id="163730">
    <property type="type" value="gene"/>
</dbReference>
<dbReference type="MIM" id="611162">
    <property type="type" value="phenotype"/>
</dbReference>
<dbReference type="neXtProt" id="NX_P35228"/>
<dbReference type="OpenTargets" id="ENSG00000007171"/>
<dbReference type="PharmGKB" id="PA164724093"/>
<dbReference type="VEuPathDB" id="HostDB:ENSG00000007171"/>
<dbReference type="eggNOG" id="KOG1158">
    <property type="taxonomic scope" value="Eukaryota"/>
</dbReference>
<dbReference type="GeneTree" id="ENSGT00940000159752"/>
<dbReference type="HOGENOM" id="CLU_001570_16_0_1"/>
<dbReference type="InParanoid" id="P35228"/>
<dbReference type="OMA" id="CRHIRYA"/>
<dbReference type="OrthoDB" id="1688044at2759"/>
<dbReference type="PAN-GO" id="P35228">
    <property type="GO annotations" value="16 GO annotations based on evolutionary models"/>
</dbReference>
<dbReference type="PhylomeDB" id="P35228"/>
<dbReference type="TreeFam" id="TF324410"/>
<dbReference type="BioCyc" id="MetaCyc:HS00205-MONOMER"/>
<dbReference type="BRENDA" id="1.14.13.39">
    <property type="organism ID" value="2681"/>
</dbReference>
<dbReference type="PathwayCommons" id="P35228"/>
<dbReference type="Reactome" id="R-HSA-1222556">
    <property type="pathway name" value="ROS and RNS production in phagocytes"/>
</dbReference>
<dbReference type="Reactome" id="R-HSA-392154">
    <property type="pathway name" value="Nitric oxide stimulates guanylate cyclase"/>
</dbReference>
<dbReference type="Reactome" id="R-HSA-6785807">
    <property type="pathway name" value="Interleukin-4 and Interleukin-13 signaling"/>
</dbReference>
<dbReference type="Reactome" id="R-HSA-9033241">
    <property type="pathway name" value="Peroxisomal protein import"/>
</dbReference>
<dbReference type="Reactome" id="R-HSA-9636249">
    <property type="pathway name" value="Inhibition of nitric oxide production"/>
</dbReference>
<dbReference type="SignaLink" id="P35228"/>
<dbReference type="SIGNOR" id="P35228"/>
<dbReference type="BioGRID-ORCS" id="4843">
    <property type="hits" value="11 hits in 1163 CRISPR screens"/>
</dbReference>
<dbReference type="ChiTaRS" id="NOS2">
    <property type="organism name" value="human"/>
</dbReference>
<dbReference type="EvolutionaryTrace" id="P35228"/>
<dbReference type="GeneWiki" id="Nitric_oxide_synthase_2_(inducible)"/>
<dbReference type="GenomeRNAi" id="4843"/>
<dbReference type="Pharos" id="P35228">
    <property type="development level" value="Tchem"/>
</dbReference>
<dbReference type="PRO" id="PR:P35228"/>
<dbReference type="Proteomes" id="UP000005640">
    <property type="component" value="Chromosome 17"/>
</dbReference>
<dbReference type="RNAct" id="P35228">
    <property type="molecule type" value="protein"/>
</dbReference>
<dbReference type="Bgee" id="ENSG00000007171">
    <property type="expression patterns" value="Expressed in cartilage tissue and 98 other cell types or tissues"/>
</dbReference>
<dbReference type="ExpressionAtlas" id="P35228">
    <property type="expression patterns" value="baseline and differential"/>
</dbReference>
<dbReference type="GO" id="GO:0030863">
    <property type="term" value="C:cortical cytoskeleton"/>
    <property type="evidence" value="ECO:0007669"/>
    <property type="project" value="Ensembl"/>
</dbReference>
<dbReference type="GO" id="GO:0005737">
    <property type="term" value="C:cytoplasm"/>
    <property type="evidence" value="ECO:0000314"/>
    <property type="project" value="UniProtKB"/>
</dbReference>
<dbReference type="GO" id="GO:0005829">
    <property type="term" value="C:cytosol"/>
    <property type="evidence" value="ECO:0000315"/>
    <property type="project" value="BHF-UCL"/>
</dbReference>
<dbReference type="GO" id="GO:0005654">
    <property type="term" value="C:nucleoplasm"/>
    <property type="evidence" value="ECO:0000304"/>
    <property type="project" value="Reactome"/>
</dbReference>
<dbReference type="GO" id="GO:0005634">
    <property type="term" value="C:nucleus"/>
    <property type="evidence" value="ECO:0000250"/>
    <property type="project" value="BHF-UCL"/>
</dbReference>
<dbReference type="GO" id="GO:0048471">
    <property type="term" value="C:perinuclear region of cytoplasm"/>
    <property type="evidence" value="ECO:0007669"/>
    <property type="project" value="Ensembl"/>
</dbReference>
<dbReference type="GO" id="GO:0005782">
    <property type="term" value="C:peroxisomal matrix"/>
    <property type="evidence" value="ECO:0000304"/>
    <property type="project" value="Reactome"/>
</dbReference>
<dbReference type="GO" id="GO:0005777">
    <property type="term" value="C:peroxisome"/>
    <property type="evidence" value="ECO:0000314"/>
    <property type="project" value="UniProtKB"/>
</dbReference>
<dbReference type="GO" id="GO:0005886">
    <property type="term" value="C:plasma membrane"/>
    <property type="evidence" value="ECO:0000318"/>
    <property type="project" value="GO_Central"/>
</dbReference>
<dbReference type="GO" id="GO:0034618">
    <property type="term" value="F:arginine binding"/>
    <property type="evidence" value="ECO:0000250"/>
    <property type="project" value="BHF-UCL"/>
</dbReference>
<dbReference type="GO" id="GO:0005516">
    <property type="term" value="F:calmodulin binding"/>
    <property type="evidence" value="ECO:0007669"/>
    <property type="project" value="UniProtKB-KW"/>
</dbReference>
<dbReference type="GO" id="GO:0050660">
    <property type="term" value="F:flavin adenine dinucleotide binding"/>
    <property type="evidence" value="ECO:0000250"/>
    <property type="project" value="BHF-UCL"/>
</dbReference>
<dbReference type="GO" id="GO:0010181">
    <property type="term" value="F:FMN binding"/>
    <property type="evidence" value="ECO:0000250"/>
    <property type="project" value="BHF-UCL"/>
</dbReference>
<dbReference type="GO" id="GO:0020037">
    <property type="term" value="F:heme binding"/>
    <property type="evidence" value="ECO:0000250"/>
    <property type="project" value="BHF-UCL"/>
</dbReference>
<dbReference type="GO" id="GO:0046872">
    <property type="term" value="F:metal ion binding"/>
    <property type="evidence" value="ECO:0007669"/>
    <property type="project" value="UniProtKB-KW"/>
</dbReference>
<dbReference type="GO" id="GO:0050661">
    <property type="term" value="F:NADP binding"/>
    <property type="evidence" value="ECO:0000304"/>
    <property type="project" value="BHF-UCL"/>
</dbReference>
<dbReference type="GO" id="GO:0004517">
    <property type="term" value="F:nitric-oxide synthase activity"/>
    <property type="evidence" value="ECO:0000314"/>
    <property type="project" value="UniProtKB"/>
</dbReference>
<dbReference type="GO" id="GO:0042803">
    <property type="term" value="F:protein homodimerization activity"/>
    <property type="evidence" value="ECO:0000250"/>
    <property type="project" value="BHF-UCL"/>
</dbReference>
<dbReference type="GO" id="GO:0034617">
    <property type="term" value="F:tetrahydrobiopterin binding"/>
    <property type="evidence" value="ECO:0000250"/>
    <property type="project" value="BHF-UCL"/>
</dbReference>
<dbReference type="GO" id="GO:0006527">
    <property type="term" value="P:arginine catabolic process"/>
    <property type="evidence" value="ECO:0000314"/>
    <property type="project" value="BHF-UCL"/>
</dbReference>
<dbReference type="GO" id="GO:0045454">
    <property type="term" value="P:cell redox homeostasis"/>
    <property type="evidence" value="ECO:0000304"/>
    <property type="project" value="Reactome"/>
</dbReference>
<dbReference type="GO" id="GO:0071222">
    <property type="term" value="P:cellular response to lipopolysaccharide"/>
    <property type="evidence" value="ECO:0007669"/>
    <property type="project" value="Ensembl"/>
</dbReference>
<dbReference type="GO" id="GO:0071346">
    <property type="term" value="P:cellular response to type II interferon"/>
    <property type="evidence" value="ECO:0007669"/>
    <property type="project" value="Ensembl"/>
</dbReference>
<dbReference type="GO" id="GO:0071466">
    <property type="term" value="P:cellular response to xenobiotic stimulus"/>
    <property type="evidence" value="ECO:0007669"/>
    <property type="project" value="Ensembl"/>
</dbReference>
<dbReference type="GO" id="GO:0007623">
    <property type="term" value="P:circadian rhythm"/>
    <property type="evidence" value="ECO:0007669"/>
    <property type="project" value="Ensembl"/>
</dbReference>
<dbReference type="GO" id="GO:0042742">
    <property type="term" value="P:defense response to bacterium"/>
    <property type="evidence" value="ECO:0000315"/>
    <property type="project" value="BHF-UCL"/>
</dbReference>
<dbReference type="GO" id="GO:0050829">
    <property type="term" value="P:defense response to Gram-negative bacterium"/>
    <property type="evidence" value="ECO:0000303"/>
    <property type="project" value="BHF-UCL"/>
</dbReference>
<dbReference type="GO" id="GO:0038096">
    <property type="term" value="P:Fc-gamma receptor signaling pathway involved in phagocytosis"/>
    <property type="evidence" value="ECO:0000315"/>
    <property type="project" value="BHF-UCL"/>
</dbReference>
<dbReference type="GO" id="GO:0006954">
    <property type="term" value="P:inflammatory response"/>
    <property type="evidence" value="ECO:0000318"/>
    <property type="project" value="GO_Central"/>
</dbReference>
<dbReference type="GO" id="GO:0002227">
    <property type="term" value="P:innate immune response in mucosa"/>
    <property type="evidence" value="ECO:0000303"/>
    <property type="project" value="BHF-UCL"/>
</dbReference>
<dbReference type="GO" id="GO:0045776">
    <property type="term" value="P:negative regulation of blood pressure"/>
    <property type="evidence" value="ECO:0000318"/>
    <property type="project" value="GO_Central"/>
</dbReference>
<dbReference type="GO" id="GO:0010629">
    <property type="term" value="P:negative regulation of gene expression"/>
    <property type="evidence" value="ECO:0000316"/>
    <property type="project" value="UniProtKB"/>
</dbReference>
<dbReference type="GO" id="GO:0042177">
    <property type="term" value="P:negative regulation of protein catabolic process"/>
    <property type="evidence" value="ECO:0007669"/>
    <property type="project" value="Ensembl"/>
</dbReference>
<dbReference type="GO" id="GO:0006809">
    <property type="term" value="P:nitric oxide biosynthetic process"/>
    <property type="evidence" value="ECO:0000314"/>
    <property type="project" value="UniProtKB"/>
</dbReference>
<dbReference type="GO" id="GO:0007263">
    <property type="term" value="P:nitric oxide mediated signal transduction"/>
    <property type="evidence" value="ECO:0000318"/>
    <property type="project" value="GO_Central"/>
</dbReference>
<dbReference type="GO" id="GO:0018119">
    <property type="term" value="P:peptidyl-cysteine S-nitrosylation"/>
    <property type="evidence" value="ECO:0000250"/>
    <property type="project" value="UniProtKB"/>
</dbReference>
<dbReference type="GO" id="GO:0032755">
    <property type="term" value="P:positive regulation of interleukin-6 production"/>
    <property type="evidence" value="ECO:0000314"/>
    <property type="project" value="UniProtKB"/>
</dbReference>
<dbReference type="GO" id="GO:0032757">
    <property type="term" value="P:positive regulation of interleukin-8 production"/>
    <property type="evidence" value="ECO:0000314"/>
    <property type="project" value="UniProtKB"/>
</dbReference>
<dbReference type="GO" id="GO:0001912">
    <property type="term" value="P:positive regulation of leukocyte mediated cytotoxicity"/>
    <property type="evidence" value="ECO:0000304"/>
    <property type="project" value="BHF-UCL"/>
</dbReference>
<dbReference type="GO" id="GO:0032310">
    <property type="term" value="P:prostaglandin secretion"/>
    <property type="evidence" value="ECO:0000314"/>
    <property type="project" value="UniProtKB"/>
</dbReference>
<dbReference type="GO" id="GO:0042127">
    <property type="term" value="P:regulation of cell population proliferation"/>
    <property type="evidence" value="ECO:0007669"/>
    <property type="project" value="Ensembl"/>
</dbReference>
<dbReference type="GO" id="GO:0043457">
    <property type="term" value="P:regulation of cellular respiration"/>
    <property type="evidence" value="ECO:0000304"/>
    <property type="project" value="BHF-UCL"/>
</dbReference>
<dbReference type="GO" id="GO:1900015">
    <property type="term" value="P:regulation of cytokine production involved in inflammatory response"/>
    <property type="evidence" value="ECO:0000314"/>
    <property type="project" value="UniProtKB"/>
</dbReference>
<dbReference type="GO" id="GO:0050796">
    <property type="term" value="P:regulation of insulin secretion"/>
    <property type="evidence" value="ECO:0000315"/>
    <property type="project" value="BHF-UCL"/>
</dbReference>
<dbReference type="GO" id="GO:0009617">
    <property type="term" value="P:response to bacterium"/>
    <property type="evidence" value="ECO:0000303"/>
    <property type="project" value="UniProtKB"/>
</dbReference>
<dbReference type="GO" id="GO:0009725">
    <property type="term" value="P:response to hormone"/>
    <property type="evidence" value="ECO:0000318"/>
    <property type="project" value="GO_Central"/>
</dbReference>
<dbReference type="GO" id="GO:0001666">
    <property type="term" value="P:response to hypoxia"/>
    <property type="evidence" value="ECO:0007669"/>
    <property type="project" value="Ensembl"/>
</dbReference>
<dbReference type="GO" id="GO:0032496">
    <property type="term" value="P:response to lipopolysaccharide"/>
    <property type="evidence" value="ECO:0000318"/>
    <property type="project" value="GO_Central"/>
</dbReference>
<dbReference type="GO" id="GO:0006801">
    <property type="term" value="P:superoxide metabolic process"/>
    <property type="evidence" value="ECO:0000250"/>
    <property type="project" value="UniProtKB"/>
</dbReference>
<dbReference type="CDD" id="cd00795">
    <property type="entry name" value="NOS_oxygenase_euk"/>
    <property type="match status" value="1"/>
</dbReference>
<dbReference type="FunFam" id="1.20.990.10:FF:000006">
    <property type="entry name" value="Nitric oxide synthase"/>
    <property type="match status" value="1"/>
</dbReference>
<dbReference type="FunFam" id="3.40.50.360:FF:000039">
    <property type="entry name" value="Nitric oxide synthase"/>
    <property type="match status" value="1"/>
</dbReference>
<dbReference type="FunFam" id="3.40.50.80:FF:000003">
    <property type="entry name" value="Nitric oxide synthase"/>
    <property type="match status" value="1"/>
</dbReference>
<dbReference type="FunFam" id="3.90.1230.10:FF:000001">
    <property type="entry name" value="Nitric oxide synthase, brain"/>
    <property type="match status" value="1"/>
</dbReference>
<dbReference type="FunFam" id="3.90.340.10:FF:000008">
    <property type="entry name" value="Nitric oxide synthase, inducible"/>
    <property type="match status" value="1"/>
</dbReference>
<dbReference type="FunFam" id="3.90.440.10:FF:000005">
    <property type="entry name" value="Nitric oxide synthase, inducible"/>
    <property type="match status" value="1"/>
</dbReference>
<dbReference type="Gene3D" id="3.40.50.360">
    <property type="match status" value="2"/>
</dbReference>
<dbReference type="Gene3D" id="6.10.250.410">
    <property type="match status" value="1"/>
</dbReference>
<dbReference type="Gene3D" id="1.20.990.10">
    <property type="entry name" value="NADPH-cytochrome p450 Reductase, Chain A, domain 3"/>
    <property type="match status" value="1"/>
</dbReference>
<dbReference type="Gene3D" id="3.90.340.10">
    <property type="entry name" value="Nitric Oxide Synthase, Chain A, domain 1"/>
    <property type="match status" value="1"/>
</dbReference>
<dbReference type="Gene3D" id="3.90.1230.10">
    <property type="entry name" value="Nitric Oxide Synthase, Chain A, domain 3"/>
    <property type="match status" value="1"/>
</dbReference>
<dbReference type="Gene3D" id="3.90.440.10">
    <property type="entry name" value="Nitric Oxide Synthase,Heme Domain,Chain A domain 2"/>
    <property type="match status" value="1"/>
</dbReference>
<dbReference type="Gene3D" id="3.40.50.80">
    <property type="entry name" value="Nucleotide-binding domain of ferredoxin-NADP reductase (FNR) module"/>
    <property type="match status" value="1"/>
</dbReference>
<dbReference type="Gene3D" id="2.40.30.10">
    <property type="entry name" value="Translation factors"/>
    <property type="match status" value="1"/>
</dbReference>
<dbReference type="InterPro" id="IPR003097">
    <property type="entry name" value="CysJ-like_FAD-binding"/>
</dbReference>
<dbReference type="InterPro" id="IPR017927">
    <property type="entry name" value="FAD-bd_FR_type"/>
</dbReference>
<dbReference type="InterPro" id="IPR001094">
    <property type="entry name" value="Flavdoxin-like"/>
</dbReference>
<dbReference type="InterPro" id="IPR008254">
    <property type="entry name" value="Flavodoxin/NO_synth"/>
</dbReference>
<dbReference type="InterPro" id="IPR001709">
    <property type="entry name" value="Flavoprot_Pyr_Nucl_cyt_Rdtase"/>
</dbReference>
<dbReference type="InterPro" id="IPR029039">
    <property type="entry name" value="Flavoprotein-like_sf"/>
</dbReference>
<dbReference type="InterPro" id="IPR039261">
    <property type="entry name" value="FNR_nucleotide-bd"/>
</dbReference>
<dbReference type="InterPro" id="IPR023173">
    <property type="entry name" value="NADPH_Cyt_P450_Rdtase_alpha"/>
</dbReference>
<dbReference type="InterPro" id="IPR050607">
    <property type="entry name" value="NOS"/>
</dbReference>
<dbReference type="InterPro" id="IPR044943">
    <property type="entry name" value="NOS_dom_1"/>
</dbReference>
<dbReference type="InterPro" id="IPR044940">
    <property type="entry name" value="NOS_dom_2"/>
</dbReference>
<dbReference type="InterPro" id="IPR044944">
    <property type="entry name" value="NOS_dom_3"/>
</dbReference>
<dbReference type="InterPro" id="IPR012144">
    <property type="entry name" value="NOS_euk"/>
</dbReference>
<dbReference type="InterPro" id="IPR004030">
    <property type="entry name" value="NOS_N"/>
</dbReference>
<dbReference type="InterPro" id="IPR036119">
    <property type="entry name" value="NOS_N_sf"/>
</dbReference>
<dbReference type="InterPro" id="IPR001433">
    <property type="entry name" value="OxRdtase_FAD/NAD-bd"/>
</dbReference>
<dbReference type="InterPro" id="IPR017938">
    <property type="entry name" value="Riboflavin_synthase-like_b-brl"/>
</dbReference>
<dbReference type="PANTHER" id="PTHR43410:SF4">
    <property type="entry name" value="NITRIC OXIDE SYNTHASE"/>
    <property type="match status" value="1"/>
</dbReference>
<dbReference type="PANTHER" id="PTHR43410">
    <property type="entry name" value="NITRIC OXIDE SYNTHASE OXYGENASE"/>
    <property type="match status" value="1"/>
</dbReference>
<dbReference type="Pfam" id="PF00667">
    <property type="entry name" value="FAD_binding_1"/>
    <property type="match status" value="1"/>
</dbReference>
<dbReference type="Pfam" id="PF00258">
    <property type="entry name" value="Flavodoxin_1"/>
    <property type="match status" value="1"/>
</dbReference>
<dbReference type="Pfam" id="PF00175">
    <property type="entry name" value="NAD_binding_1"/>
    <property type="match status" value="1"/>
</dbReference>
<dbReference type="Pfam" id="PF02898">
    <property type="entry name" value="NO_synthase"/>
    <property type="match status" value="1"/>
</dbReference>
<dbReference type="PIRSF" id="PIRSF000333">
    <property type="entry name" value="NOS"/>
    <property type="match status" value="1"/>
</dbReference>
<dbReference type="PRINTS" id="PR00369">
    <property type="entry name" value="FLAVODOXIN"/>
</dbReference>
<dbReference type="PRINTS" id="PR00371">
    <property type="entry name" value="FPNCR"/>
</dbReference>
<dbReference type="SUPFAM" id="SSF52343">
    <property type="entry name" value="Ferredoxin reductase-like, C-terminal NADP-linked domain"/>
    <property type="match status" value="1"/>
</dbReference>
<dbReference type="SUPFAM" id="SSF52218">
    <property type="entry name" value="Flavoproteins"/>
    <property type="match status" value="1"/>
</dbReference>
<dbReference type="SUPFAM" id="SSF56512">
    <property type="entry name" value="Nitric oxide (NO) synthase oxygenase domain"/>
    <property type="match status" value="1"/>
</dbReference>
<dbReference type="SUPFAM" id="SSF63380">
    <property type="entry name" value="Riboflavin synthase domain-like"/>
    <property type="match status" value="1"/>
</dbReference>
<dbReference type="PROSITE" id="PS51384">
    <property type="entry name" value="FAD_FR"/>
    <property type="match status" value="1"/>
</dbReference>
<dbReference type="PROSITE" id="PS50902">
    <property type="entry name" value="FLAVODOXIN_LIKE"/>
    <property type="match status" value="1"/>
</dbReference>
<dbReference type="PROSITE" id="PS60001">
    <property type="entry name" value="NOS"/>
    <property type="match status" value="1"/>
</dbReference>
<protein>
    <recommendedName>
        <fullName evidence="29">Nitric oxide synthase, inducible</fullName>
        <ecNumber evidence="21 26">1.14.13.39</ecNumber>
    </recommendedName>
    <alternativeName>
        <fullName>Hepatocyte NOS</fullName>
        <shortName>HEP-NOS</shortName>
    </alternativeName>
    <alternativeName>
        <fullName>Inducible NO synthase</fullName>
        <shortName>Inducible NOS</shortName>
        <shortName>iNOS</shortName>
    </alternativeName>
    <alternativeName>
        <fullName>NOS type II</fullName>
    </alternativeName>
    <alternativeName>
        <fullName>Peptidyl-cysteine S-nitrosylase NOS2</fullName>
    </alternativeName>
</protein>
<reference key="1">
    <citation type="journal article" date="1993" name="Biochemistry">
        <title>Purification and cDNA sequence of an inducible nitric oxide synthase from a human tumor cell line.</title>
        <authorList>
            <person name="Sherman P.A."/>
            <person name="Laubach V.E."/>
            <person name="Reep B.R."/>
            <person name="Wood E.R."/>
        </authorList>
    </citation>
    <scope>NUCLEOTIDE SEQUENCE [MRNA] (ISOFORM 1)</scope>
    <scope>FUNCTION</scope>
    <source>
        <tissue>Colon adenocarcinoma</tissue>
    </source>
</reference>
<reference key="2">
    <citation type="journal article" date="1993" name="Proc. Natl. Acad. Sci. U.S.A.">
        <title>Molecular cloning and expression of inducible nitric oxide synthase from human hepatocytes.</title>
        <authorList>
            <person name="Geller D.A."/>
            <person name="Lowenstein C.J."/>
            <person name="Shapiro R.A."/>
            <person name="Nussler A.K."/>
            <person name="di Silvio M."/>
            <person name="Wang S.C."/>
            <person name="Nakayama D.K."/>
            <person name="Simmons R.L."/>
            <person name="Snyder S.H."/>
            <person name="Billiar T.R."/>
        </authorList>
    </citation>
    <scope>NUCLEOTIDE SEQUENCE [MRNA] (ISOFORM 1)</scope>
    <scope>FUNCTION</scope>
    <scope>CATALYTIC ACTIVITY</scope>
    <source>
        <tissue>Liver</tissue>
    </source>
</reference>
<reference key="3">
    <citation type="journal article" date="1993" name="Proc. Natl. Acad. Sci. U.S.A.">
        <title>Cloning, characterization, and expression of a cDNA encoding an inducible nitric oxide synthase from the human chondrocyte.</title>
        <authorList>
            <person name="Charles I.G."/>
            <person name="Palmer R.M.J."/>
            <person name="Hickery M.S."/>
            <person name="Bayliss M.T."/>
            <person name="Chubb A.P."/>
            <person name="Hall V.S."/>
            <person name="Moss D.W."/>
            <person name="Moncada S."/>
        </authorList>
    </citation>
    <scope>NUCLEOTIDE SEQUENCE [MRNA] (ISOFORM 1)</scope>
    <scope>FUNCTION</scope>
    <scope>CATALYTIC ACTIVITY</scope>
    <scope>TISSUE SPECIFICITY</scope>
    <scope>INDUCTION BY IL1B</scope>
    <source>
        <tissue>Chondrocyte</tissue>
    </source>
</reference>
<reference key="4">
    <citation type="journal article" date="1994" name="Biochim. Biophys. Acta">
        <title>Inducible nitric oxide synthase from human articular chondrocytes: cDNA cloning and analysis of mRNA expression.</title>
        <authorList>
            <person name="Maier R."/>
            <person name="Bilbe G."/>
            <person name="Rediske J."/>
            <person name="Lotz M."/>
        </authorList>
    </citation>
    <scope>NUCLEOTIDE SEQUENCE [MRNA] (ISOFORM 1)</scope>
    <source>
        <tissue>Articular chondrocyte</tissue>
    </source>
</reference>
<reference key="5">
    <citation type="journal article" date="1994" name="Biochem. Biophys. Res. Commun.">
        <title>Human retina expresses both constitutive and inducible isoforms of nitric oxide synthase mRNA.</title>
        <authorList>
            <person name="Park C.S."/>
            <person name="Pardhasaradhi K."/>
            <person name="Gianotti C."/>
            <person name="Villegas E."/>
            <person name="Krishna G."/>
        </authorList>
    </citation>
    <scope>NUCLEOTIDE SEQUENCE [MRNA] (ISOFORM 1)</scope>
    <scope>VARIANT LEU-608</scope>
    <scope>FUNCTION</scope>
    <source>
        <tissue>Retina</tissue>
    </source>
</reference>
<reference key="6">
    <citation type="journal article" date="1994" name="J. Biochem.">
        <title>Cloning and functional expression of human inducible nitric oxide synthase (NOS) cDNA from a glioblastoma cell line A-172.</title>
        <authorList>
            <person name="Hokari A."/>
            <person name="Zeniya M."/>
            <person name="Esumi H."/>
        </authorList>
    </citation>
    <scope>NUCLEOTIDE SEQUENCE [MRNA] (ISOFORM 1)</scope>
    <scope>VARIANT LEU-608</scope>
    <source>
        <tissue>Glioblastoma</tissue>
    </source>
</reference>
<reference key="7">
    <citation type="journal article" date="1995" name="Proc. Natl. Acad. Sci. U.S.A.">
        <title>Continuous nitric oxide synthesis by inducible nitric oxide synthase in normal human airway epithelium in vivo.</title>
        <authorList>
            <person name="Guo F.H."/>
            <person name="de Raeve R.H."/>
            <person name="Rice T.W."/>
            <person name="Stuehr D.J."/>
            <person name="Thunnissen F.B.J.M."/>
            <person name="Erzurum S.C."/>
        </authorList>
    </citation>
    <scope>NUCLEOTIDE SEQUENCE [MRNA] (ISOFORM 1)</scope>
    <source>
        <tissue>Airway epithelium</tissue>
    </source>
</reference>
<reference key="8">
    <citation type="journal article" date="1997" name="J. Mol. Cell. Cardiol.">
        <title>Dedifferentiated human ventricular cardiac myocytes express inducible nitric oxide synthase mRNA but not protein in response to IL-1, TNF, IFNgamma, and LPS.</title>
        <authorList>
            <person name="Luss H."/>
            <person name="Li R.-K."/>
            <person name="Shapiro R.A."/>
            <person name="Tzeng E."/>
            <person name="McGowan F.X."/>
            <person name="Yoneyama T."/>
            <person name="Hatakayama K."/>
            <person name="Geller D.A."/>
            <person name="Mickle D.A.G."/>
            <person name="Simmons R.L."/>
            <person name="Billiar T.R."/>
        </authorList>
    </citation>
    <scope>NUCLEOTIDE SEQUENCE [MRNA] (ISOFORM 1)</scope>
    <source>
        <tissue>Cardiac myocyte</tissue>
    </source>
</reference>
<reference key="9">
    <citation type="submission" date="1999-01" db="EMBL/GenBank/DDBJ databases">
        <title>Cloning and characterization of a novel splice valiant of human inducible nitric oxide synthase.</title>
        <authorList>
            <person name="Ogawa Y."/>
            <person name="Nishijima S."/>
            <person name="Goto M."/>
            <person name="Ida M."/>
        </authorList>
    </citation>
    <scope>NUCLEOTIDE SEQUENCE [MRNA] (ISOFORM 2)</scope>
</reference>
<reference key="10">
    <citation type="submission" date="2005-05" db="EMBL/GenBank/DDBJ databases">
        <authorList>
            <consortium name="NIEHS SNPs program"/>
        </authorList>
    </citation>
    <scope>NUCLEOTIDE SEQUENCE [GENOMIC DNA]</scope>
    <scope>VARIANTS TRP-221; LEU-608; ALA-747 AND CYS-1009</scope>
</reference>
<reference key="11">
    <citation type="submission" date="2007-12" db="EMBL/GenBank/DDBJ databases">
        <authorList>
            <consortium name="NHLBI resequencing and genotyping service (RS&amp;G)"/>
        </authorList>
    </citation>
    <scope>NUCLEOTIDE SEQUENCE [GENOMIC DNA]</scope>
</reference>
<reference key="12">
    <citation type="journal article" date="2004" name="Genome Res.">
        <title>The status, quality, and expansion of the NIH full-length cDNA project: the Mammalian Gene Collection (MGC).</title>
        <authorList>
            <consortium name="The MGC Project Team"/>
        </authorList>
    </citation>
    <scope>NUCLEOTIDE SEQUENCE [LARGE SCALE MRNA] (ISOFORM 1)</scope>
</reference>
<reference key="13">
    <citation type="journal article" date="1994" name="Kidney Int.">
        <title>Nitric oxide production by human proximal tubular cells: a novel immunomodulatory mechanism?</title>
        <authorList>
            <person name="McLay J.S."/>
            <person name="Chatterjee P."/>
            <person name="Nicolson A.G."/>
            <person name="Jardine A.G."/>
            <person name="McKay N.G."/>
            <person name="Ralston S.H."/>
            <person name="Grabowski P."/>
            <person name="Haites N.E."/>
            <person name="Macleod A.M."/>
            <person name="Hawksworth G.M."/>
        </authorList>
    </citation>
    <scope>NUCLEOTIDE SEQUENCE [MRNA] OF 380-473</scope>
    <source>
        <tissue>Kidney</tissue>
    </source>
</reference>
<reference key="14">
    <citation type="journal article" date="1995" name="J. Neurochem.">
        <title>Inducible nitric oxide synthase in a human glioblastoma cell line.</title>
        <authorList>
            <person name="Fujisawa H."/>
            <person name="Ogura T."/>
            <person name="Hokari A."/>
            <person name="Weisz A."/>
            <person name="Yamashita J."/>
            <person name="Esumi H."/>
        </authorList>
    </citation>
    <scope>NUCLEOTIDE SEQUENCE [MRNA] OF 667-831</scope>
    <scope>INDUCTION</scope>
    <source>
        <tissue>Glioblastoma</tissue>
    </source>
</reference>
<reference key="15">
    <citation type="journal article" date="1995" name="Genomics">
        <title>Three members of the nitric oxide synthase II gene family (NOS2A, NOS2B, and NOS2C) colocalize to human chromosome 17.</title>
        <authorList>
            <person name="Bloch K.D."/>
            <person name="Wolfram J.R."/>
            <person name="Brown D.M."/>
            <person name="Roberts J.D. Jr."/>
            <person name="Zapol D.G."/>
            <person name="Lepore J.J."/>
            <person name="Filippov G."/>
            <person name="Thomas J.E."/>
            <person name="Jacob H.J."/>
            <person name="Bloch D.B."/>
        </authorList>
    </citation>
    <scope>CHARACTERIZATION</scope>
</reference>
<reference key="16">
    <citation type="journal article" date="1998" name="Biochemistry (Mosc.)">
        <title>Inducible nitric oxide synthase in the liver: regulation and function.</title>
        <authorList>
            <person name="Taylor B.S."/>
            <person name="Alarcon L.H."/>
            <person name="Billiar T.R."/>
        </authorList>
    </citation>
    <scope>CHARACTERIZATION</scope>
</reference>
<reference key="17">
    <citation type="journal article" date="2002" name="J. Biol. Chem.">
        <title>Epithelial inducible nitric-oxide synthase is an apical EBP50-binding protein that directs vectorial nitric oxide output.</title>
        <authorList>
            <person name="Glynne P.A."/>
            <person name="Darling K.E.A."/>
            <person name="Picot J."/>
            <person name="Evans T.J."/>
        </authorList>
    </citation>
    <scope>INTERACTION WITH NHERF1</scope>
</reference>
<reference key="18">
    <citation type="journal article" date="2002" name="Lancet">
        <title>A new NOS2 promoter polymorphism associated with increased nitric oxide production and protection from severe malaria in Tanzanian and Kenyan children.</title>
        <authorList>
            <person name="Hobbs M.R."/>
            <person name="Udhayakumar V."/>
            <person name="Levesque M.C."/>
            <person name="Booth J."/>
            <person name="Roberts J.M."/>
            <person name="Tkachuk A.N."/>
            <person name="Pole A."/>
            <person name="Coon H."/>
            <person name="Kariuki S."/>
            <person name="Nahlen B.L."/>
            <person name="Mwaikambo E.D."/>
            <person name="Lal A.L."/>
            <person name="Granger D.L."/>
            <person name="Anstey N.M."/>
            <person name="Weinberg J.B."/>
        </authorList>
    </citation>
    <scope>POLYMORPHISM</scope>
    <scope>INVOLVEMENT IN RESISTANCE TO MALARIA</scope>
</reference>
<reference key="19">
    <citation type="journal article" date="2009" name="Mediators Inflamm.">
        <title>Leptin enhances synthesis of proinflammatory mediators in human osteoarthritic cartilage--mediator role of NO in leptin-induced PGE2, IL-6, and IL-8 production.</title>
        <authorList>
            <person name="Vuolteenaho K."/>
            <person name="Koskinen A."/>
            <person name="Kukkonen M."/>
            <person name="Nieminen R."/>
            <person name="Paeivaerinta U."/>
            <person name="Moilanen T."/>
            <person name="Moilanen E."/>
        </authorList>
    </citation>
    <scope>FUNCTION</scope>
</reference>
<reference key="20">
    <citation type="journal article" date="2011" name="J. Biol. Chem.">
        <title>Regulation of inducible nitric-oxide synthase by the SPRY domain- and SOCS box-containing proteins.</title>
        <authorList>
            <person name="Nishiya T."/>
            <person name="Matsumoto K."/>
            <person name="Maekawa S."/>
            <person name="Kajita E."/>
            <person name="Horinouchi T."/>
            <person name="Fujimuro M."/>
            <person name="Ogasawara K."/>
            <person name="Uehara T."/>
            <person name="Miwa S."/>
        </authorList>
    </citation>
    <scope>POLYUBIQUITINATION</scope>
    <scope>PROTEASOMAL DEGRADATION</scope>
    <scope>SUBCELLULAR LOCATION</scope>
    <scope>INTERACTION WITH SPSB1; SPSB2; SPSB4; ELOC AND CUL5</scope>
    <scope>MUTAGENESIS OF ASN-27</scope>
    <scope>MOTIF DINNN</scope>
</reference>
<reference key="21">
    <citation type="journal article" date="2014" name="Cell">
        <title>Target-selective protein S-nitrosylation by sequence motif recognition.</title>
        <authorList>
            <person name="Jia J."/>
            <person name="Arif A."/>
            <person name="Terenzi F."/>
            <person name="Willard B."/>
            <person name="Plow E.F."/>
            <person name="Hazen S.L."/>
            <person name="Fox P.L."/>
        </authorList>
    </citation>
    <scope>FUNCTION</scope>
    <scope>INTERACTION WITH S100A8; S100A9 AND GAPDH</scope>
    <scope>ASSEMBLY IN THE INOS-S100A8/A9 COMPLEX</scope>
    <scope>INDUCTION BY LDL</scope>
</reference>
<reference key="22">
    <citation type="journal article" date="2014" name="Redox Biol.">
        <title>Zinc regulates iNOS-derived nitric oxide formation in endothelial cells.</title>
        <authorList>
            <person name="Cortese-Krott M.M."/>
            <person name="Kulakov L."/>
            <person name="Oplaender C."/>
            <person name="Kolb-Bachofen V."/>
            <person name="Kroencke K.D."/>
            <person name="Suschek C.V."/>
        </authorList>
    </citation>
    <scope>INDUCTION</scope>
</reference>
<reference key="23">
    <citation type="journal article" date="2022" name="Bioorg. Med. Chem.">
        <title>2-Aminopyridines with a shortened amino sidechain as potent, selective, and highly permeable human neuronal nitric oxide synthase inhibitors.</title>
        <authorList>
            <person name="Vasu D."/>
            <person name="Li H."/>
            <person name="Hardy C.D."/>
            <person name="Poulos T.L."/>
            <person name="Silverman R.B."/>
        </authorList>
    </citation>
    <scope>CATALYTIC ACTIVITY</scope>
</reference>
<reference evidence="34 35" key="24">
    <citation type="journal article" date="1999" name="J. Biol. Chem.">
        <title>Crystal structures of zinc-free and -bound heme domain of human inducible nitric-oxide synthase. Implications for dimer stability and comparison with endothelial nitric-oxide synthase.</title>
        <authorList>
            <person name="Li H."/>
            <person name="Raman C.S."/>
            <person name="Glaser C.B."/>
            <person name="Blasko E."/>
            <person name="Young T.A."/>
            <person name="Parkinson J.F."/>
            <person name="Whitlow M."/>
            <person name="Poulos T.L."/>
        </authorList>
    </citation>
    <scope>X-RAY CRYSTALLOGRAPHY (2.55 ANGSTROMS) OF 74-504 IN COMPLEX WITH (6R)-L-ERYTHRO-5,6,7,8-TETRAHYDROBIOPTERIN; HEME B AND ZINC</scope>
    <scope>COFACTOR</scope>
    <scope>SUBUNIT</scope>
    <scope>DISULFIDE BOND</scope>
</reference>
<reference evidence="37" key="25">
    <citation type="journal article" date="1999" name="Nat. Struct. Biol.">
        <title>Structural characterization of nitric oxide synthase isoforms reveals striking active-site conservation.</title>
        <authorList>
            <person name="Fischmann T.O."/>
            <person name="Hruza A."/>
            <person name="Niu X.D."/>
            <person name="Fossetta J.D."/>
            <person name="Lunn C.A."/>
            <person name="Dolphin E."/>
            <person name="Prongay A.J."/>
            <person name="Reichert P."/>
            <person name="Lundell D.J."/>
            <person name="Narula S.K."/>
            <person name="Weber P.C."/>
        </authorList>
    </citation>
    <scope>X-RAY CRYSTALLOGRAPHY (2.25 ANGSTROMS) OF 82-528 IN COMPLEX WITH (6R)-L-ERYTHRO-5,6,7,8-TETRAHYDROBIOPTERIN; HEME B AND ZINC</scope>
    <scope>COFACTOR</scope>
    <scope>SUBUNIT</scope>
</reference>
<reference evidence="36" key="26">
    <citation type="journal article" date="2009" name="J. Biol. Chem.">
        <title>Regulation of interdomain interactions by calmodulin in inducible nitric-oxide synthase.</title>
        <authorList>
            <person name="Xia C."/>
            <person name="Misra I."/>
            <person name="Iyanagi T."/>
            <person name="Kim J.J."/>
        </authorList>
    </citation>
    <scope>X-RAY CRYSTALLOGRAPHY (2.50 ANGSTROMS) OF 503-715 IN COMPLEX WITH CALMODULIN AND FMN</scope>
    <scope>COFACTOR</scope>
</reference>
<reference key="27">
    <citation type="journal article" date="2006" name="Science">
        <title>The consensus coding sequences of human breast and colorectal cancers.</title>
        <authorList>
            <person name="Sjoeblom T."/>
            <person name="Jones S."/>
            <person name="Wood L.D."/>
            <person name="Parsons D.W."/>
            <person name="Lin J."/>
            <person name="Barber T.D."/>
            <person name="Mandelker D."/>
            <person name="Leary R.J."/>
            <person name="Ptak J."/>
            <person name="Silliman N."/>
            <person name="Szabo S."/>
            <person name="Buckhaults P."/>
            <person name="Farrell C."/>
            <person name="Meeh P."/>
            <person name="Markowitz S.D."/>
            <person name="Willis J."/>
            <person name="Dawson D."/>
            <person name="Willson J.K.V."/>
            <person name="Gazdar A.F."/>
            <person name="Hartigan J."/>
            <person name="Wu L."/>
            <person name="Liu C."/>
            <person name="Parmigiani G."/>
            <person name="Park B.H."/>
            <person name="Bachman K.E."/>
            <person name="Papadopoulos N."/>
            <person name="Vogelstein B."/>
            <person name="Kinzler K.W."/>
            <person name="Velculescu V.E."/>
        </authorList>
    </citation>
    <scope>VARIANT [LARGE SCALE ANALYSIS] SER-679</scope>
</reference>
<reference key="28">
    <citation type="journal article" date="2014" name="Clin. Transl. Gastroenterol.">
        <title>Higher activity of the inducible nitric oxide synthase contributes to very early onset inflammatory bowel disease.</title>
        <authorList>
            <person name="Dhillon S.S."/>
            <person name="Mastropaolo L.A."/>
            <person name="Murchie R."/>
            <person name="Griffiths C."/>
            <person name="Thoeni C."/>
            <person name="Elkadri A."/>
            <person name="Xu W."/>
            <person name="Mack A."/>
            <person name="Walters T."/>
            <person name="Guo C."/>
            <person name="Mack D."/>
            <person name="Huynh H."/>
            <person name="Baksh S."/>
            <person name="Silverberg M.S."/>
            <person name="Brumell J.H."/>
            <person name="Snapper S.B."/>
            <person name="Muise A.M."/>
        </authorList>
    </citation>
    <scope>VARIANT LEU-608</scope>
    <scope>CHARACTERIZATION OF VARIANT LEU-608</scope>
</reference>
<sequence>MACPWKFLFKTKFHQYAMNGEKDINNNVEKAPCATSSPVTQDDLQYHNLSKQQNESPQPLVETGKKSPESLVKLDATPLSSPRHVRIKNWGSGMTFQDTLHHKAKGILTCRSKSCLGSIMTPKSLTRGPRDKPTPPDELLPQAIEFVNQYYGSFKEAKIEEHLARVEAVTKEIETTGTYQLTGDELIFATKQAWRNAPRCIGRIQWSNLQVFDARSCSTAREMFEHICRHVRYSTNNGNIRSAITVFPQRSDGKHDFRVWNAQLIRYAGYQMPDGSIRGDPANVEFTQLCIDLGWKPKYGRFDVVPLVLQANGRDPELFEIPPDLVLEVAMEHPKYEWFRELELKWYALPAVANMLLEVGGLEFPGCPFNGWYMGTEIGVRDFCDVQRYNILEEVGRRMGLETHKLASLWKDQAVVEINIAVLHSFQKQNVTIMDHHSAAESFMKYMQNEYRSRGGCPADWIWLVPPMSGSITPVFHQEMLNYVLSPFYYYQVEAWKTHVWQDEKRRPKRREIPLKVLVKAVLFACMLMRKTMASRVRVTILFATETGKSEALAWDLGALFSCAFNPKVVCMDKYRLSCLEEERLLLVVTSTFGNGDCPGNGEKLKKSLFMLKELNNKFRYAVFGLGSSMYPRFCAFAHDIDQKLSHLGASQLTPMGEGDELSGQEDAFRSWAVQTFKAACETFDVRGKQHIQIPKLYTSNVTWDPHHYRLVQDSQPLDLSKALSSMHAKNVFTMRLKSRQNLQSPTSSRATILVELSCEDGQGLNYLPGEHLGVCPGNQPALVQGILERVVDGPTPHQTVRLEALDESGSYWVSDKRLPPCSLSQALTYFLDITTPPTQLLLQKLAQVATEEPERQRLEALCQPSEYSKWKFTNSPTFLEVLEEFPSLRVSAGFLLSQLPILKPRFYSISSSRDHTPTEIHLTVAVVTYHTRDGQGPLHHGVCSTWLNSLKPQDPVPCFVRNASGFHLPEDPSHPCILIGPGTGIAPFRSFWQQRLHDSQHKGVRGGRMTLVFGCRRPDEDHIYQEEMLEMAQKGVLHAVHTAYSRLPGKPKVYVQDILRQQLASEVLRVLHKEPGHLYVCGDVRMARDVAHTLKQLVAAKLKLNEEQVEDYFFQLKSQKRYHEDIFGAVFPYEAKKDRVAVQPSSLEMSAL</sequence>
<keyword id="KW-0002">3D-structure</keyword>
<keyword id="KW-0025">Alternative splicing</keyword>
<keyword id="KW-0106">Calcium</keyword>
<keyword id="KW-0112">Calmodulin-binding</keyword>
<keyword id="KW-0963">Cytoplasm</keyword>
<keyword id="KW-0274">FAD</keyword>
<keyword id="KW-0285">Flavoprotein</keyword>
<keyword id="KW-0288">FMN</keyword>
<keyword id="KW-0349">Heme</keyword>
<keyword id="KW-0408">Iron</keyword>
<keyword id="KW-0479">Metal-binding</keyword>
<keyword id="KW-0521">NADP</keyword>
<keyword id="KW-0560">Oxidoreductase</keyword>
<keyword id="KW-0597">Phosphoprotein</keyword>
<keyword id="KW-1267">Proteomics identification</keyword>
<keyword id="KW-1185">Reference proteome</keyword>
<keyword id="KW-0832">Ubl conjugation</keyword>
<keyword id="KW-0862">Zinc</keyword>